<protein>
    <recommendedName>
        <fullName evidence="13">NADH-ubiquinone oxidoreductase chain 2</fullName>
        <ecNumber evidence="5">7.1.1.2</ecNumber>
    </recommendedName>
    <alternativeName>
        <fullName>NADH dehydrogenase subunit 2</fullName>
    </alternativeName>
</protein>
<accession>P03891</accession>
<accession>Q34769</accession>
<accession>Q9TGI0</accession>
<accession>Q9TGI1</accession>
<accession>Q9TGI2</accession>
<accession>Q9TGI3</accession>
<accession>Q9TGI4</accession>
<gene>
    <name evidence="14" type="primary">MT-ND2</name>
    <name type="synonym">MTND2</name>
    <name type="synonym">NADH2</name>
    <name type="synonym">ND2</name>
</gene>
<name>NU2M_HUMAN</name>
<geneLocation type="mitochondrion"/>
<reference key="1">
    <citation type="journal article" date="1981" name="Nature">
        <title>Sequence and organization of the human mitochondrial genome.</title>
        <authorList>
            <person name="Anderson S."/>
            <person name="Bankier A.T."/>
            <person name="Barrell B.G."/>
            <person name="de Bruijn M.H.L."/>
            <person name="Coulson A.R."/>
            <person name="Drouin J."/>
            <person name="Eperon I.C."/>
            <person name="Nierlich D.P."/>
            <person name="Roe B.A."/>
            <person name="Sanger F."/>
            <person name="Schreier P.H."/>
            <person name="Smith A.J.H."/>
            <person name="Staden R."/>
            <person name="Young I.G."/>
        </authorList>
    </citation>
    <scope>NUCLEOTIDE SEQUENCE [LARGE SCALE GENOMIC DNA]</scope>
</reference>
<reference key="2">
    <citation type="journal article" date="1980" name="J. Mol. Biol.">
        <title>Cloning in single-stranded bacteriophage as an aid to rapid DNA sequencing.</title>
        <authorList>
            <person name="Sanger F."/>
            <person name="Coulson A.R."/>
            <person name="Barrell B.G."/>
            <person name="Smith A.J.H."/>
            <person name="Roe B.A."/>
        </authorList>
    </citation>
    <scope>NUCLEOTIDE SEQUENCE [GENOMIC DNA]</scope>
</reference>
<reference key="3">
    <citation type="journal article" date="1998" name="Genetics">
        <title>Departure from neutrality at the mitochondrial NADH dehydrogenase subunit 2 gene in humans, but not in chimpanzees.</title>
        <authorList>
            <person name="Wise C.A."/>
            <person name="Sraml M."/>
            <person name="Easteal S."/>
        </authorList>
    </citation>
    <scope>NUCLEOTIDE SEQUENCE [GENOMIC DNA]</scope>
    <scope>VARIANTS VAL-69; SER-88; ASP-150; MET-237; THR-265; VAL-265; THR-278 AND ALA-333</scope>
</reference>
<reference key="4">
    <citation type="journal article" date="1995" name="Proc. Natl. Acad. Sci. U.S.A.">
        <title>Recent African origin of modern humans revealed by complete sequences of hominoid mitochondrial DNAs.</title>
        <authorList>
            <person name="Horai S."/>
            <person name="Hayasaka K."/>
            <person name="Kondo R."/>
            <person name="Tsugane K."/>
            <person name="Takahata N."/>
        </authorList>
    </citation>
    <scope>NUCLEOTIDE SEQUENCE [GENOMIC DNA]</scope>
    <scope>VARIANTS ILE-43; LEU-325 AND THR-331</scope>
    <source>
        <tissue>Placenta</tissue>
    </source>
</reference>
<reference key="5">
    <citation type="journal article" date="2003" name="Mol. Biol. Evol.">
        <title>Lineage-specific selection in human mtDNA: lack of polymorphisms in a segment of MTND5 gene in haplogroup J.</title>
        <authorList>
            <person name="Moilanen J.S."/>
            <person name="Finnila S."/>
            <person name="Majamaa K."/>
        </authorList>
    </citation>
    <scope>NUCLEOTIDE SEQUENCE [GENOMIC DNA]</scope>
</reference>
<reference key="6">
    <citation type="journal article" date="2000" name="Nature">
        <title>Mitochondrial genome variation and the origin of modern humans.</title>
        <authorList>
            <person name="Ingman M."/>
            <person name="Kaessmann H."/>
            <person name="Paeaebo S."/>
            <person name="Gyllensten U."/>
        </authorList>
    </citation>
    <scope>NUCLEOTIDE SEQUENCE [GENOMIC DNA]</scope>
</reference>
<reference key="7">
    <citation type="journal article" date="2003" name="Genome Res.">
        <title>Mitochondrial genome variation and evolutionary history of Australian and New Guinean aborigines.</title>
        <authorList>
            <person name="Ingman M."/>
            <person name="Gyllensten U."/>
        </authorList>
    </citation>
    <scope>NUCLEOTIDE SEQUENCE [GENOMIC DNA]</scope>
</reference>
<reference key="8">
    <citation type="journal article" date="2004" name="Int. J. Legal Med.">
        <title>Single nucleotide polymorphisms over the entire mtDNA genome that increase the power of forensic testing in Caucasians.</title>
        <authorList>
            <person name="Coble M.D."/>
            <person name="Just R.S."/>
            <person name="O'Callaghan J.E."/>
            <person name="Letmanyi I.H."/>
            <person name="Peterson C.T."/>
            <person name="Irwin J.A."/>
            <person name="Parsons T.J."/>
        </authorList>
    </citation>
    <scope>NUCLEOTIDE SEQUENCE [GENOMIC DNA]</scope>
</reference>
<reference key="9">
    <citation type="journal article" date="1985" name="Nature">
        <title>Six unidentified reading frames of human mitochondrial DNA encode components of the respiratory-chain NADH dehydrogenase.</title>
        <authorList>
            <person name="Chomyn A."/>
            <person name="Mariottini P."/>
            <person name="Cleeter M.W.J."/>
            <person name="Ragan C.I."/>
            <person name="Matsuno-Yagi A."/>
            <person name="Hatefi Y."/>
            <person name="Doolittle R.F."/>
            <person name="Attardi G."/>
        </authorList>
    </citation>
    <scope>IDENTIFICATION OF PROTEIN</scope>
</reference>
<reference key="10">
    <citation type="journal article" date="2003" name="J. Biol. Chem.">
        <title>The subunit composition of the human NADH dehydrogenase obtained by rapid one-step immunopurification.</title>
        <authorList>
            <person name="Murray J."/>
            <person name="Zhang B."/>
            <person name="Taylor S.W."/>
            <person name="Oglesbee D."/>
            <person name="Fahy E."/>
            <person name="Marusich M.F."/>
            <person name="Ghosh S.S."/>
            <person name="Capaldi R.A."/>
        </authorList>
    </citation>
    <scope>IDENTIFICATION IN THE NADH-UBIQUINONE OXIDOREDUCTASE COMPLEX</scope>
    <scope>IDENTIFICATION BY MASS SPECTROMETRY</scope>
</reference>
<reference key="11">
    <citation type="journal article" date="2009" name="Sci. Signal.">
        <title>Quantitative phosphoproteomic analysis of T cell receptor signaling reveals system-wide modulation of protein-protein interactions.</title>
        <authorList>
            <person name="Mayya V."/>
            <person name="Lundgren D.H."/>
            <person name="Hwang S.-I."/>
            <person name="Rezaul K."/>
            <person name="Wu L."/>
            <person name="Eng J.K."/>
            <person name="Rodionov V."/>
            <person name="Han D.K."/>
        </authorList>
    </citation>
    <scope>IDENTIFICATION BY MASS SPECTROMETRY [LARGE SCALE ANALYSIS]</scope>
    <source>
        <tissue>Leukemic T-cell</tissue>
    </source>
</reference>
<reference key="12">
    <citation type="journal article" date="2015" name="Proteomics">
        <title>N-terminome analysis of the human mitochondrial proteome.</title>
        <authorList>
            <person name="Vaca Jacome A.S."/>
            <person name="Rabilloud T."/>
            <person name="Schaeffer-Reiss C."/>
            <person name="Rompais M."/>
            <person name="Ayoub D."/>
            <person name="Lane L."/>
            <person name="Bairoch A."/>
            <person name="Van Dorsselaer A."/>
            <person name="Carapito C."/>
        </authorList>
    </citation>
    <scope>IDENTIFICATION BY MASS SPECTROMETRY [LARGE SCALE ANALYSIS]</scope>
</reference>
<reference key="13">
    <citation type="journal article" date="2021" name="Proc. Natl. Acad. Sci. U.S.A.">
        <title>TMEM70 and TMEM242 help to assemble the rotor ring of human ATP synthase and interact with assembly factors for complex I.</title>
        <authorList>
            <person name="Carroll J."/>
            <person name="He J."/>
            <person name="Ding S."/>
            <person name="Fearnley I.M."/>
            <person name="Walker J.E."/>
        </authorList>
    </citation>
    <scope>INTERACTION WITH TMEM242</scope>
</reference>
<reference key="14">
    <citation type="journal article" date="1991" name="Biochem. Biophys. Res. Commun.">
        <title>Alternative, simultaneous complex I mitochondrial DNA mutations in Leber's hereditary optic neuropathy.</title>
        <authorList>
            <person name="Johns D.R."/>
            <person name="Berman J."/>
        </authorList>
    </citation>
    <scope>VARIANT LHON ASP-150</scope>
</reference>
<reference key="15">
    <citation type="journal article" date="1991" name="Hum. Genet.">
        <title>Normal variants of human mitochondrial DNA and translation products: the building of a reference data base.</title>
        <authorList>
            <person name="Marzuki S."/>
            <person name="Noer A.S."/>
            <person name="Lertrit P."/>
            <person name="Thyagarajan D."/>
            <person name="Kapsa R."/>
            <person name="Utthanaphol P."/>
            <person name="Byrne E."/>
        </authorList>
    </citation>
    <scope>VARIANTS LEU-42; ARG-63; ALA-119; PRO-148; SER-150; THR-159 AND ALA-185</scope>
</reference>
<reference key="16">
    <citation type="journal article" date="1992" name="Genetics">
        <title>Mitochondrial DNA complex I and III mutations associated with Leber's hereditary optic neuropathy.</title>
        <authorList>
            <person name="Brown M.D."/>
            <person name="Voljavec A.S."/>
            <person name="Lott M.T."/>
            <person name="Torroni A."/>
            <person name="Yang C.C."/>
            <person name="Wallace D.C."/>
        </authorList>
    </citation>
    <scope>VARIANT LHON SER-259</scope>
</reference>
<reference key="17">
    <citation type="journal article" date="1992" name="Biochem. Biophys. Res. Commun.">
        <title>Detection of point mutations in codon 331 of mitochondrial NADH dehydrogenase subunit 2 in Alzheimer's brains.</title>
        <authorList>
            <person name="Lin F.-H."/>
            <person name="Lin R."/>
            <person name="Wisniewski H.M."/>
            <person name="Hwang Y.-W."/>
            <person name="Grundke-Iqbal I."/>
            <person name="Healy-Louie G."/>
            <person name="Iqbal K."/>
        </authorList>
    </citation>
    <scope>VARIANT AD-MT SER-331</scope>
</reference>
<reference key="18">
    <citation type="journal article" date="1998" name="Nucleic Acids Res.">
        <title>Automating the identification of DNA variations using quality-based fluorescence re-sequencing: analysis of the human mitochondrial genome.</title>
        <authorList>
            <person name="Rieder M.J."/>
            <person name="Taylor S.L."/>
            <person name="Tobe V.O."/>
            <person name="Nickerson D.A."/>
        </authorList>
    </citation>
    <scope>VARIANT THR-57</scope>
</reference>
<reference key="19">
    <citation type="journal article" date="2007" name="Mol. Genet. Metab.">
        <title>Mutated ND2 impairs mitochondrial complex I assembly and leads to Leigh syndrome.</title>
        <authorList>
            <person name="Ugalde C."/>
            <person name="Hinttala R."/>
            <person name="Timal S."/>
            <person name="Smeets R."/>
            <person name="Rodenburg R.J."/>
            <person name="Uusimaa J."/>
            <person name="van Heuvel L.P."/>
            <person name="Nijtmans L.G."/>
            <person name="Majamaa K."/>
            <person name="Smeitink J.A."/>
        </authorList>
    </citation>
    <scope>VARIANT LS PRO-71</scope>
    <scope>CHARACTERIZATION OF LS VARIANT PRO-71</scope>
    <scope>FUNCTION</scope>
    <scope>CATALYTIC ACTIVITY</scope>
</reference>
<dbReference type="EC" id="7.1.1.2" evidence="5"/>
<dbReference type="EMBL" id="J01415">
    <property type="protein sequence ID" value="AAB58944.1"/>
    <property type="molecule type" value="Genomic_DNA"/>
</dbReference>
<dbReference type="EMBL" id="V00662">
    <property type="protein sequence ID" value="CAA24027.1"/>
    <property type="molecule type" value="Genomic_DNA"/>
</dbReference>
<dbReference type="EMBL" id="M10546">
    <property type="protein sequence ID" value="AAA65502.1"/>
    <property type="status" value="ALT_INIT"/>
    <property type="molecule type" value="Genomic_DNA"/>
</dbReference>
<dbReference type="EMBL" id="D38112">
    <property type="protein sequence ID" value="BAA07291.1"/>
    <property type="molecule type" value="Genomic_DNA"/>
</dbReference>
<dbReference type="EMBL" id="AF014882">
    <property type="protein sequence ID" value="AAC25441.1"/>
    <property type="molecule type" value="Genomic_DNA"/>
</dbReference>
<dbReference type="EMBL" id="AF014884">
    <property type="protein sequence ID" value="AAC25443.1"/>
    <property type="molecule type" value="Genomic_DNA"/>
</dbReference>
<dbReference type="EMBL" id="AF014885">
    <property type="protein sequence ID" value="AAC25444.1"/>
    <property type="molecule type" value="Genomic_DNA"/>
</dbReference>
<dbReference type="EMBL" id="AF014887">
    <property type="protein sequence ID" value="AAC25446.1"/>
    <property type="molecule type" value="Genomic_DNA"/>
</dbReference>
<dbReference type="EMBL" id="AF014889">
    <property type="protein sequence ID" value="AAC25448.1"/>
    <property type="molecule type" value="Genomic_DNA"/>
</dbReference>
<dbReference type="EMBL" id="AF014890">
    <property type="protein sequence ID" value="AAC25449.1"/>
    <property type="molecule type" value="Genomic_DNA"/>
</dbReference>
<dbReference type="EMBL" id="AF014891">
    <property type="protein sequence ID" value="AAC25450.1"/>
    <property type="molecule type" value="Genomic_DNA"/>
</dbReference>
<dbReference type="EMBL" id="AF014892">
    <property type="protein sequence ID" value="AAC25451.1"/>
    <property type="molecule type" value="Genomic_DNA"/>
</dbReference>
<dbReference type="EMBL" id="AF014895">
    <property type="protein sequence ID" value="AAC25454.1"/>
    <property type="molecule type" value="Genomic_DNA"/>
</dbReference>
<dbReference type="EMBL" id="AF014896">
    <property type="protein sequence ID" value="AAC25455.2"/>
    <property type="molecule type" value="Genomic_DNA"/>
</dbReference>
<dbReference type="EMBL" id="AF014897">
    <property type="protein sequence ID" value="AAC25456.1"/>
    <property type="molecule type" value="Genomic_DNA"/>
</dbReference>
<dbReference type="EMBL" id="AF014898">
    <property type="protein sequence ID" value="AAC25457.1"/>
    <property type="molecule type" value="Genomic_DNA"/>
</dbReference>
<dbReference type="EMBL" id="AF014899">
    <property type="protein sequence ID" value="AAC25458.2"/>
    <property type="molecule type" value="Genomic_DNA"/>
</dbReference>
<dbReference type="EMBL" id="AF014900">
    <property type="protein sequence ID" value="AAC25459.1"/>
    <property type="molecule type" value="Genomic_DNA"/>
</dbReference>
<dbReference type="EMBL" id="AF014901">
    <property type="protein sequence ID" value="AAC25460.1"/>
    <property type="molecule type" value="Genomic_DNA"/>
</dbReference>
<dbReference type="EMBL" id="AY339402">
    <property type="protein sequence ID" value="AAP89037.1"/>
    <property type="molecule type" value="Genomic_DNA"/>
</dbReference>
<dbReference type="EMBL" id="AY339403">
    <property type="protein sequence ID" value="AAP89050.1"/>
    <property type="molecule type" value="Genomic_DNA"/>
</dbReference>
<dbReference type="EMBL" id="AY339404">
    <property type="protein sequence ID" value="AAP89063.1"/>
    <property type="molecule type" value="Genomic_DNA"/>
</dbReference>
<dbReference type="EMBL" id="AY339405">
    <property type="protein sequence ID" value="AAP89076.1"/>
    <property type="molecule type" value="Genomic_DNA"/>
</dbReference>
<dbReference type="EMBL" id="AY339406">
    <property type="protein sequence ID" value="AAP89089.1"/>
    <property type="molecule type" value="Genomic_DNA"/>
</dbReference>
<dbReference type="EMBL" id="AY339407">
    <property type="protein sequence ID" value="AAP89102.1"/>
    <property type="molecule type" value="Genomic_DNA"/>
</dbReference>
<dbReference type="EMBL" id="AY339408">
    <property type="protein sequence ID" value="AAP89115.1"/>
    <property type="molecule type" value="Genomic_DNA"/>
</dbReference>
<dbReference type="EMBL" id="AY339409">
    <property type="protein sequence ID" value="AAP89128.1"/>
    <property type="molecule type" value="Genomic_DNA"/>
</dbReference>
<dbReference type="EMBL" id="AY339410">
    <property type="protein sequence ID" value="AAP89141.1"/>
    <property type="molecule type" value="Genomic_DNA"/>
</dbReference>
<dbReference type="EMBL" id="AY339411">
    <property type="protein sequence ID" value="AAP89154.1"/>
    <property type="molecule type" value="Genomic_DNA"/>
</dbReference>
<dbReference type="EMBL" id="AY339412">
    <property type="protein sequence ID" value="AAP89167.1"/>
    <property type="molecule type" value="Genomic_DNA"/>
</dbReference>
<dbReference type="EMBL" id="AY339413">
    <property type="protein sequence ID" value="AAP89180.1"/>
    <property type="molecule type" value="Genomic_DNA"/>
</dbReference>
<dbReference type="EMBL" id="AY339414">
    <property type="protein sequence ID" value="AAP89193.1"/>
    <property type="molecule type" value="Genomic_DNA"/>
</dbReference>
<dbReference type="EMBL" id="AY339415">
    <property type="protein sequence ID" value="AAP89206.1"/>
    <property type="molecule type" value="Genomic_DNA"/>
</dbReference>
<dbReference type="EMBL" id="AY339416">
    <property type="protein sequence ID" value="AAP89219.1"/>
    <property type="molecule type" value="Genomic_DNA"/>
</dbReference>
<dbReference type="EMBL" id="AY339417">
    <property type="protein sequence ID" value="AAP89232.1"/>
    <property type="molecule type" value="Genomic_DNA"/>
</dbReference>
<dbReference type="EMBL" id="AY339418">
    <property type="protein sequence ID" value="AAP89245.1"/>
    <property type="molecule type" value="Genomic_DNA"/>
</dbReference>
<dbReference type="EMBL" id="AY339419">
    <property type="protein sequence ID" value="AAP89258.1"/>
    <property type="molecule type" value="Genomic_DNA"/>
</dbReference>
<dbReference type="EMBL" id="AY339420">
    <property type="protein sequence ID" value="AAP89271.1"/>
    <property type="molecule type" value="Genomic_DNA"/>
</dbReference>
<dbReference type="EMBL" id="AY339421">
    <property type="protein sequence ID" value="AAP89284.1"/>
    <property type="molecule type" value="Genomic_DNA"/>
</dbReference>
<dbReference type="EMBL" id="AY339422">
    <property type="protein sequence ID" value="AAP89297.1"/>
    <property type="molecule type" value="Genomic_DNA"/>
</dbReference>
<dbReference type="EMBL" id="AY339423">
    <property type="protein sequence ID" value="AAP89310.1"/>
    <property type="molecule type" value="Genomic_DNA"/>
</dbReference>
<dbReference type="EMBL" id="AY339424">
    <property type="protein sequence ID" value="AAP89323.1"/>
    <property type="molecule type" value="Genomic_DNA"/>
</dbReference>
<dbReference type="EMBL" id="AY339425">
    <property type="protein sequence ID" value="AAP89336.1"/>
    <property type="molecule type" value="Genomic_DNA"/>
</dbReference>
<dbReference type="EMBL" id="AY339426">
    <property type="protein sequence ID" value="AAP89349.1"/>
    <property type="molecule type" value="Genomic_DNA"/>
</dbReference>
<dbReference type="EMBL" id="AY339427">
    <property type="protein sequence ID" value="AAP89362.1"/>
    <property type="molecule type" value="Genomic_DNA"/>
</dbReference>
<dbReference type="EMBL" id="AY339428">
    <property type="protein sequence ID" value="AAP89375.1"/>
    <property type="molecule type" value="Genomic_DNA"/>
</dbReference>
<dbReference type="EMBL" id="AY339429">
    <property type="protein sequence ID" value="AAP89388.1"/>
    <property type="molecule type" value="Genomic_DNA"/>
</dbReference>
<dbReference type="EMBL" id="AY339430">
    <property type="protein sequence ID" value="AAP89401.1"/>
    <property type="molecule type" value="Genomic_DNA"/>
</dbReference>
<dbReference type="EMBL" id="AY339431">
    <property type="protein sequence ID" value="AAP89414.1"/>
    <property type="molecule type" value="Genomic_DNA"/>
</dbReference>
<dbReference type="EMBL" id="AY339432">
    <property type="protein sequence ID" value="AAP89427.1"/>
    <property type="molecule type" value="Genomic_DNA"/>
</dbReference>
<dbReference type="EMBL" id="AY339433">
    <property type="protein sequence ID" value="AAP89440.1"/>
    <property type="molecule type" value="Genomic_DNA"/>
</dbReference>
<dbReference type="EMBL" id="AY339446">
    <property type="protein sequence ID" value="AAP89609.1"/>
    <property type="molecule type" value="Genomic_DNA"/>
</dbReference>
<dbReference type="EMBL" id="AY339447">
    <property type="protein sequence ID" value="AAP89622.1"/>
    <property type="molecule type" value="Genomic_DNA"/>
</dbReference>
<dbReference type="EMBL" id="AY339448">
    <property type="protein sequence ID" value="AAP89635.1"/>
    <property type="molecule type" value="Genomic_DNA"/>
</dbReference>
<dbReference type="EMBL" id="AY339449">
    <property type="protein sequence ID" value="AAP89648.1"/>
    <property type="molecule type" value="Genomic_DNA"/>
</dbReference>
<dbReference type="EMBL" id="AY339450">
    <property type="protein sequence ID" value="AAP89661.1"/>
    <property type="molecule type" value="Genomic_DNA"/>
</dbReference>
<dbReference type="EMBL" id="AY339451">
    <property type="protein sequence ID" value="AAP89674.1"/>
    <property type="molecule type" value="Genomic_DNA"/>
</dbReference>
<dbReference type="EMBL" id="AY339452">
    <property type="protein sequence ID" value="AAP89687.1"/>
    <property type="molecule type" value="Genomic_DNA"/>
</dbReference>
<dbReference type="EMBL" id="AY339453">
    <property type="protein sequence ID" value="AAP89700.1"/>
    <property type="molecule type" value="Genomic_DNA"/>
</dbReference>
<dbReference type="EMBL" id="AY339454">
    <property type="protein sequence ID" value="AAP89713.1"/>
    <property type="molecule type" value="Genomic_DNA"/>
</dbReference>
<dbReference type="EMBL" id="AY339455">
    <property type="protein sequence ID" value="AAP89726.1"/>
    <property type="molecule type" value="Genomic_DNA"/>
</dbReference>
<dbReference type="EMBL" id="AY339456">
    <property type="protein sequence ID" value="AAP89739.1"/>
    <property type="molecule type" value="Genomic_DNA"/>
</dbReference>
<dbReference type="EMBL" id="AY339457">
    <property type="protein sequence ID" value="AAP89752.1"/>
    <property type="molecule type" value="Genomic_DNA"/>
</dbReference>
<dbReference type="EMBL" id="AY339458">
    <property type="protein sequence ID" value="AAP89765.1"/>
    <property type="molecule type" value="Genomic_DNA"/>
</dbReference>
<dbReference type="EMBL" id="AY339459">
    <property type="protein sequence ID" value="AAP89778.1"/>
    <property type="molecule type" value="Genomic_DNA"/>
</dbReference>
<dbReference type="EMBL" id="AY339497">
    <property type="protein sequence ID" value="AAP90272.1"/>
    <property type="molecule type" value="Genomic_DNA"/>
</dbReference>
<dbReference type="EMBL" id="AY339498">
    <property type="protein sequence ID" value="AAP90285.1"/>
    <property type="molecule type" value="Genomic_DNA"/>
</dbReference>
<dbReference type="EMBL" id="AY339499">
    <property type="protein sequence ID" value="AAP90298.1"/>
    <property type="molecule type" value="Genomic_DNA"/>
</dbReference>
<dbReference type="EMBL" id="AY339500">
    <property type="protein sequence ID" value="AAP90311.1"/>
    <property type="molecule type" value="Genomic_DNA"/>
</dbReference>
<dbReference type="EMBL" id="AY339501">
    <property type="protein sequence ID" value="AAP90324.1"/>
    <property type="molecule type" value="Genomic_DNA"/>
</dbReference>
<dbReference type="EMBL" id="AY339502">
    <property type="protein sequence ID" value="AAP90337.1"/>
    <property type="molecule type" value="Genomic_DNA"/>
</dbReference>
<dbReference type="EMBL" id="AY339503">
    <property type="protein sequence ID" value="AAP90350.1"/>
    <property type="molecule type" value="Genomic_DNA"/>
</dbReference>
<dbReference type="EMBL" id="AY339504">
    <property type="protein sequence ID" value="AAP90363.1"/>
    <property type="molecule type" value="Genomic_DNA"/>
</dbReference>
<dbReference type="EMBL" id="AY339505">
    <property type="protein sequence ID" value="AAP90376.1"/>
    <property type="molecule type" value="Genomic_DNA"/>
</dbReference>
<dbReference type="EMBL" id="AY339506">
    <property type="protein sequence ID" value="AAP90389.1"/>
    <property type="molecule type" value="Genomic_DNA"/>
</dbReference>
<dbReference type="EMBL" id="AY339507">
    <property type="protein sequence ID" value="AAP90402.1"/>
    <property type="molecule type" value="Genomic_DNA"/>
</dbReference>
<dbReference type="EMBL" id="AY339508">
    <property type="protein sequence ID" value="AAP90415.1"/>
    <property type="molecule type" value="Genomic_DNA"/>
</dbReference>
<dbReference type="EMBL" id="AY339509">
    <property type="protein sequence ID" value="AAP90428.1"/>
    <property type="molecule type" value="Genomic_DNA"/>
</dbReference>
<dbReference type="EMBL" id="AY339510">
    <property type="protein sequence ID" value="AAP90441.1"/>
    <property type="molecule type" value="Genomic_DNA"/>
</dbReference>
<dbReference type="EMBL" id="AY339511">
    <property type="protein sequence ID" value="AAP90454.1"/>
    <property type="molecule type" value="Genomic_DNA"/>
</dbReference>
<dbReference type="EMBL" id="AY339512">
    <property type="protein sequence ID" value="AAP90467.1"/>
    <property type="molecule type" value="Genomic_DNA"/>
</dbReference>
<dbReference type="EMBL" id="AY339513">
    <property type="protein sequence ID" value="AAP90480.1"/>
    <property type="molecule type" value="Genomic_DNA"/>
</dbReference>
<dbReference type="EMBL" id="AY339514">
    <property type="protein sequence ID" value="AAP90493.1"/>
    <property type="molecule type" value="Genomic_DNA"/>
</dbReference>
<dbReference type="EMBL" id="AY339515">
    <property type="protein sequence ID" value="AAP90506.1"/>
    <property type="molecule type" value="Genomic_DNA"/>
</dbReference>
<dbReference type="EMBL" id="AY339516">
    <property type="protein sequence ID" value="AAP90519.1"/>
    <property type="molecule type" value="Genomic_DNA"/>
</dbReference>
<dbReference type="EMBL" id="AY339517">
    <property type="protein sequence ID" value="AAP90532.1"/>
    <property type="molecule type" value="Genomic_DNA"/>
</dbReference>
<dbReference type="EMBL" id="AY339518">
    <property type="protein sequence ID" value="AAP90545.1"/>
    <property type="molecule type" value="Genomic_DNA"/>
</dbReference>
<dbReference type="EMBL" id="AY339519">
    <property type="protein sequence ID" value="AAP90558.1"/>
    <property type="molecule type" value="Genomic_DNA"/>
</dbReference>
<dbReference type="EMBL" id="AY339520">
    <property type="protein sequence ID" value="AAP90571.1"/>
    <property type="molecule type" value="Genomic_DNA"/>
</dbReference>
<dbReference type="EMBL" id="AY339521">
    <property type="protein sequence ID" value="AAP90584.1"/>
    <property type="molecule type" value="Genomic_DNA"/>
</dbReference>
<dbReference type="EMBL" id="AY339522">
    <property type="protein sequence ID" value="AAP90597.1"/>
    <property type="molecule type" value="Genomic_DNA"/>
</dbReference>
<dbReference type="EMBL" id="AY339523">
    <property type="protein sequence ID" value="AAP90610.1"/>
    <property type="molecule type" value="Genomic_DNA"/>
</dbReference>
<dbReference type="EMBL" id="AY339524">
    <property type="protein sequence ID" value="AAP90623.1"/>
    <property type="molecule type" value="Genomic_DNA"/>
</dbReference>
<dbReference type="EMBL" id="AY339525">
    <property type="protein sequence ID" value="AAP90636.1"/>
    <property type="molecule type" value="Genomic_DNA"/>
</dbReference>
<dbReference type="EMBL" id="AY339526">
    <property type="protein sequence ID" value="AAP90649.1"/>
    <property type="molecule type" value="Genomic_DNA"/>
</dbReference>
<dbReference type="EMBL" id="AY339527">
    <property type="protein sequence ID" value="AAP90662.1"/>
    <property type="molecule type" value="Genomic_DNA"/>
</dbReference>
<dbReference type="EMBL" id="AY339528">
    <property type="protein sequence ID" value="AAP90675.1"/>
    <property type="molecule type" value="Genomic_DNA"/>
</dbReference>
<dbReference type="EMBL" id="AY339529">
    <property type="protein sequence ID" value="AAP90688.1"/>
    <property type="molecule type" value="Genomic_DNA"/>
</dbReference>
<dbReference type="EMBL" id="AY339530">
    <property type="protein sequence ID" value="AAP90701.1"/>
    <property type="molecule type" value="Genomic_DNA"/>
</dbReference>
<dbReference type="EMBL" id="AY339531">
    <property type="protein sequence ID" value="AAP90714.1"/>
    <property type="molecule type" value="Genomic_DNA"/>
</dbReference>
<dbReference type="EMBL" id="AY339532">
    <property type="protein sequence ID" value="AAP90727.1"/>
    <property type="molecule type" value="Genomic_DNA"/>
</dbReference>
<dbReference type="EMBL" id="AY339533">
    <property type="protein sequence ID" value="AAP90740.1"/>
    <property type="molecule type" value="Genomic_DNA"/>
</dbReference>
<dbReference type="EMBL" id="AY339534">
    <property type="protein sequence ID" value="AAP90753.1"/>
    <property type="molecule type" value="Genomic_DNA"/>
</dbReference>
<dbReference type="EMBL" id="AY339535">
    <property type="protein sequence ID" value="AAP90766.1"/>
    <property type="molecule type" value="Genomic_DNA"/>
</dbReference>
<dbReference type="EMBL" id="AY339536">
    <property type="protein sequence ID" value="AAP90779.1"/>
    <property type="molecule type" value="Genomic_DNA"/>
</dbReference>
<dbReference type="EMBL" id="AY339537">
    <property type="protein sequence ID" value="AAP90792.1"/>
    <property type="molecule type" value="Genomic_DNA"/>
</dbReference>
<dbReference type="EMBL" id="AY339538">
    <property type="protein sequence ID" value="AAP90805.1"/>
    <property type="molecule type" value="Genomic_DNA"/>
</dbReference>
<dbReference type="EMBL" id="AY339539">
    <property type="protein sequence ID" value="AAP90818.1"/>
    <property type="molecule type" value="Genomic_DNA"/>
</dbReference>
<dbReference type="EMBL" id="AY339540">
    <property type="protein sequence ID" value="AAP90831.1"/>
    <property type="molecule type" value="Genomic_DNA"/>
</dbReference>
<dbReference type="EMBL" id="AY339541">
    <property type="protein sequence ID" value="AAP90844.1"/>
    <property type="molecule type" value="Genomic_DNA"/>
</dbReference>
<dbReference type="EMBL" id="AY339542">
    <property type="protein sequence ID" value="AAP90857.1"/>
    <property type="molecule type" value="Genomic_DNA"/>
</dbReference>
<dbReference type="EMBL" id="AY339543">
    <property type="protein sequence ID" value="AAP90870.1"/>
    <property type="molecule type" value="Genomic_DNA"/>
</dbReference>
<dbReference type="EMBL" id="AY339545">
    <property type="protein sequence ID" value="AAP90896.1"/>
    <property type="molecule type" value="Genomic_DNA"/>
</dbReference>
<dbReference type="EMBL" id="AY339546">
    <property type="protein sequence ID" value="AAP90909.1"/>
    <property type="molecule type" value="Genomic_DNA"/>
</dbReference>
<dbReference type="EMBL" id="AY339547">
    <property type="protein sequence ID" value="AAP90922.1"/>
    <property type="molecule type" value="Genomic_DNA"/>
</dbReference>
<dbReference type="EMBL" id="AY339548">
    <property type="protein sequence ID" value="AAP90935.1"/>
    <property type="molecule type" value="Genomic_DNA"/>
</dbReference>
<dbReference type="EMBL" id="AY339549">
    <property type="protein sequence ID" value="AAP90948.1"/>
    <property type="molecule type" value="Genomic_DNA"/>
</dbReference>
<dbReference type="EMBL" id="AY339550">
    <property type="protein sequence ID" value="AAP90961.1"/>
    <property type="molecule type" value="Genomic_DNA"/>
</dbReference>
<dbReference type="EMBL" id="AY339551">
    <property type="protein sequence ID" value="AAP90974.1"/>
    <property type="molecule type" value="Genomic_DNA"/>
</dbReference>
<dbReference type="EMBL" id="AY339552">
    <property type="protein sequence ID" value="AAP90987.1"/>
    <property type="molecule type" value="Genomic_DNA"/>
</dbReference>
<dbReference type="EMBL" id="AY339553">
    <property type="protein sequence ID" value="AAP91000.1"/>
    <property type="molecule type" value="Genomic_DNA"/>
</dbReference>
<dbReference type="EMBL" id="AY339554">
    <property type="protein sequence ID" value="AAP91013.1"/>
    <property type="molecule type" value="Genomic_DNA"/>
</dbReference>
<dbReference type="EMBL" id="AY339555">
    <property type="protein sequence ID" value="AAP91026.1"/>
    <property type="molecule type" value="Genomic_DNA"/>
</dbReference>
<dbReference type="EMBL" id="AY339556">
    <property type="protein sequence ID" value="AAP91039.1"/>
    <property type="molecule type" value="Genomic_DNA"/>
</dbReference>
<dbReference type="EMBL" id="AY339557">
    <property type="protein sequence ID" value="AAP91052.1"/>
    <property type="molecule type" value="Genomic_DNA"/>
</dbReference>
<dbReference type="EMBL" id="AY339558">
    <property type="protein sequence ID" value="AAP91065.1"/>
    <property type="molecule type" value="Genomic_DNA"/>
</dbReference>
<dbReference type="EMBL" id="AY339559">
    <property type="protein sequence ID" value="AAP91078.1"/>
    <property type="molecule type" value="Genomic_DNA"/>
</dbReference>
<dbReference type="EMBL" id="AY339560">
    <property type="protein sequence ID" value="AAP91091.1"/>
    <property type="molecule type" value="Genomic_DNA"/>
</dbReference>
<dbReference type="EMBL" id="AY339561">
    <property type="protein sequence ID" value="AAP91104.1"/>
    <property type="molecule type" value="Genomic_DNA"/>
</dbReference>
<dbReference type="EMBL" id="AY339562">
    <property type="protein sequence ID" value="AAP91117.1"/>
    <property type="molecule type" value="Genomic_DNA"/>
</dbReference>
<dbReference type="EMBL" id="AY339563">
    <property type="protein sequence ID" value="AAP91130.1"/>
    <property type="molecule type" value="Genomic_DNA"/>
</dbReference>
<dbReference type="EMBL" id="AY339564">
    <property type="protein sequence ID" value="AAP91143.1"/>
    <property type="molecule type" value="Genomic_DNA"/>
</dbReference>
<dbReference type="EMBL" id="AY339565">
    <property type="protein sequence ID" value="AAP91156.1"/>
    <property type="molecule type" value="Genomic_DNA"/>
</dbReference>
<dbReference type="EMBL" id="AY339577">
    <property type="protein sequence ID" value="AAP91312.1"/>
    <property type="molecule type" value="Genomic_DNA"/>
</dbReference>
<dbReference type="EMBL" id="AY339578">
    <property type="protein sequence ID" value="AAP91325.1"/>
    <property type="molecule type" value="Genomic_DNA"/>
</dbReference>
<dbReference type="EMBL" id="AY339579">
    <property type="protein sequence ID" value="AAP91338.1"/>
    <property type="molecule type" value="Genomic_DNA"/>
</dbReference>
<dbReference type="EMBL" id="AY339580">
    <property type="protein sequence ID" value="AAP91351.1"/>
    <property type="molecule type" value="Genomic_DNA"/>
</dbReference>
<dbReference type="EMBL" id="AY339583">
    <property type="protein sequence ID" value="AAP91390.1"/>
    <property type="molecule type" value="Genomic_DNA"/>
</dbReference>
<dbReference type="EMBL" id="AY339584">
    <property type="protein sequence ID" value="AAP91403.1"/>
    <property type="molecule type" value="Genomic_DNA"/>
</dbReference>
<dbReference type="EMBL" id="AY339585">
    <property type="protein sequence ID" value="AAP91416.1"/>
    <property type="molecule type" value="Genomic_DNA"/>
</dbReference>
<dbReference type="EMBL" id="AY339586">
    <property type="protein sequence ID" value="AAP91429.1"/>
    <property type="molecule type" value="Genomic_DNA"/>
</dbReference>
<dbReference type="EMBL" id="AY339587">
    <property type="protein sequence ID" value="AAP91442.1"/>
    <property type="molecule type" value="Genomic_DNA"/>
</dbReference>
<dbReference type="EMBL" id="AY339588">
    <property type="protein sequence ID" value="AAP91455.1"/>
    <property type="molecule type" value="Genomic_DNA"/>
</dbReference>
<dbReference type="EMBL" id="AY339589">
    <property type="protein sequence ID" value="AAP91468.1"/>
    <property type="molecule type" value="Genomic_DNA"/>
</dbReference>
<dbReference type="EMBL" id="AY339590">
    <property type="protein sequence ID" value="AAP91481.1"/>
    <property type="molecule type" value="Genomic_DNA"/>
</dbReference>
<dbReference type="EMBL" id="AY339591">
    <property type="protein sequence ID" value="AAP91494.1"/>
    <property type="molecule type" value="Genomic_DNA"/>
</dbReference>
<dbReference type="EMBL" id="AY339592">
    <property type="protein sequence ID" value="AAP91507.1"/>
    <property type="molecule type" value="Genomic_DNA"/>
</dbReference>
<dbReference type="EMBL" id="AY339593">
    <property type="protein sequence ID" value="AAP91520.1"/>
    <property type="molecule type" value="Genomic_DNA"/>
</dbReference>
<dbReference type="EMBL" id="AF346963">
    <property type="protein sequence ID" value="AAK17208.1"/>
    <property type="molecule type" value="Genomic_DNA"/>
</dbReference>
<dbReference type="EMBL" id="AF346964">
    <property type="protein sequence ID" value="AAK17221.1"/>
    <property type="molecule type" value="Genomic_DNA"/>
</dbReference>
<dbReference type="EMBL" id="AF346965">
    <property type="protein sequence ID" value="AAK17234.1"/>
    <property type="molecule type" value="Genomic_DNA"/>
</dbReference>
<dbReference type="EMBL" id="AF346968">
    <property type="protein sequence ID" value="AAK17273.1"/>
    <property type="molecule type" value="Genomic_DNA"/>
</dbReference>
<dbReference type="EMBL" id="AF346970">
    <property type="protein sequence ID" value="AAK17299.1"/>
    <property type="molecule type" value="Genomic_DNA"/>
</dbReference>
<dbReference type="EMBL" id="AF346974">
    <property type="protein sequence ID" value="AAK17351.1"/>
    <property type="molecule type" value="Genomic_DNA"/>
</dbReference>
<dbReference type="EMBL" id="AF346975">
    <property type="protein sequence ID" value="AAK17364.1"/>
    <property type="molecule type" value="Genomic_DNA"/>
</dbReference>
<dbReference type="EMBL" id="AF346976">
    <property type="protein sequence ID" value="AAK17377.1"/>
    <property type="molecule type" value="Genomic_DNA"/>
</dbReference>
<dbReference type="EMBL" id="AF346977">
    <property type="protein sequence ID" value="AAK17390.1"/>
    <property type="molecule type" value="Genomic_DNA"/>
</dbReference>
<dbReference type="EMBL" id="AF346978">
    <property type="protein sequence ID" value="AAK17403.1"/>
    <property type="molecule type" value="Genomic_DNA"/>
</dbReference>
<dbReference type="EMBL" id="AF346979">
    <property type="protein sequence ID" value="AAK17416.1"/>
    <property type="molecule type" value="Genomic_DNA"/>
</dbReference>
<dbReference type="EMBL" id="AF346980">
    <property type="protein sequence ID" value="AAK17429.1"/>
    <property type="molecule type" value="Genomic_DNA"/>
</dbReference>
<dbReference type="EMBL" id="AF346981">
    <property type="protein sequence ID" value="AAK17442.1"/>
    <property type="molecule type" value="Genomic_DNA"/>
</dbReference>
<dbReference type="EMBL" id="AF346983">
    <property type="protein sequence ID" value="AAK17468.1"/>
    <property type="molecule type" value="Genomic_DNA"/>
</dbReference>
<dbReference type="EMBL" id="AF346988">
    <property type="protein sequence ID" value="AAK17533.1"/>
    <property type="molecule type" value="Genomic_DNA"/>
</dbReference>
<dbReference type="EMBL" id="AF346991">
    <property type="protein sequence ID" value="AAK17572.1"/>
    <property type="molecule type" value="Genomic_DNA"/>
</dbReference>
<dbReference type="EMBL" id="AF346992">
    <property type="protein sequence ID" value="AAK17585.1"/>
    <property type="molecule type" value="Genomic_DNA"/>
</dbReference>
<dbReference type="EMBL" id="AF346994">
    <property type="protein sequence ID" value="AAK17611.1"/>
    <property type="molecule type" value="Genomic_DNA"/>
</dbReference>
<dbReference type="EMBL" id="AF346995">
    <property type="protein sequence ID" value="AAK17624.1"/>
    <property type="molecule type" value="Genomic_DNA"/>
</dbReference>
<dbReference type="EMBL" id="AF346997">
    <property type="protein sequence ID" value="AAK17650.1"/>
    <property type="molecule type" value="Genomic_DNA"/>
</dbReference>
<dbReference type="EMBL" id="AF347000">
    <property type="protein sequence ID" value="AAK17689.1"/>
    <property type="molecule type" value="Genomic_DNA"/>
</dbReference>
<dbReference type="EMBL" id="AF347001">
    <property type="protein sequence ID" value="AAK17702.1"/>
    <property type="molecule type" value="Genomic_DNA"/>
</dbReference>
<dbReference type="EMBL" id="AF347002">
    <property type="protein sequence ID" value="AAK17715.1"/>
    <property type="molecule type" value="Genomic_DNA"/>
</dbReference>
<dbReference type="EMBL" id="AF347004">
    <property type="protein sequence ID" value="AAK17741.1"/>
    <property type="molecule type" value="Genomic_DNA"/>
</dbReference>
<dbReference type="EMBL" id="AF347005">
    <property type="protein sequence ID" value="AAK17754.1"/>
    <property type="molecule type" value="Genomic_DNA"/>
</dbReference>
<dbReference type="EMBL" id="AF347006">
    <property type="protein sequence ID" value="AAK17767.1"/>
    <property type="molecule type" value="Genomic_DNA"/>
</dbReference>
<dbReference type="EMBL" id="AF347007">
    <property type="protein sequence ID" value="AAK17780.1"/>
    <property type="molecule type" value="Genomic_DNA"/>
</dbReference>
<dbReference type="EMBL" id="AF347011">
    <property type="protein sequence ID" value="AAK17832.1"/>
    <property type="molecule type" value="Genomic_DNA"/>
</dbReference>
<dbReference type="EMBL" id="AF347012">
    <property type="protein sequence ID" value="AAK17845.1"/>
    <property type="molecule type" value="Genomic_DNA"/>
</dbReference>
<dbReference type="EMBL" id="AF347013">
    <property type="protein sequence ID" value="AAK17858.1"/>
    <property type="molecule type" value="Genomic_DNA"/>
</dbReference>
<dbReference type="EMBL" id="AF347014">
    <property type="protein sequence ID" value="AAK17871.1"/>
    <property type="molecule type" value="Genomic_DNA"/>
</dbReference>
<dbReference type="EMBL" id="AF347015">
    <property type="protein sequence ID" value="AAK17884.1"/>
    <property type="molecule type" value="Genomic_DNA"/>
</dbReference>
<dbReference type="EMBL" id="AY289051">
    <property type="protein sequence ID" value="AAP47881.1"/>
    <property type="molecule type" value="Genomic_DNA"/>
</dbReference>
<dbReference type="EMBL" id="AY289053">
    <property type="protein sequence ID" value="AAP47907.1"/>
    <property type="molecule type" value="Genomic_DNA"/>
</dbReference>
<dbReference type="EMBL" id="AY289054">
    <property type="protein sequence ID" value="AAP47920.1"/>
    <property type="molecule type" value="Genomic_DNA"/>
</dbReference>
<dbReference type="EMBL" id="AY289055">
    <property type="protein sequence ID" value="AAP47933.1"/>
    <property type="molecule type" value="Genomic_DNA"/>
</dbReference>
<dbReference type="EMBL" id="AY289057">
    <property type="protein sequence ID" value="AAP47959.1"/>
    <property type="molecule type" value="Genomic_DNA"/>
</dbReference>
<dbReference type="EMBL" id="AY289061">
    <property type="protein sequence ID" value="AAP48011.1"/>
    <property type="molecule type" value="Genomic_DNA"/>
</dbReference>
<dbReference type="EMBL" id="AY289062">
    <property type="protein sequence ID" value="AAP48024.1"/>
    <property type="molecule type" value="Genomic_DNA"/>
</dbReference>
<dbReference type="EMBL" id="AY289063">
    <property type="protein sequence ID" value="AAP48037.1"/>
    <property type="molecule type" value="Genomic_DNA"/>
</dbReference>
<dbReference type="EMBL" id="AY289065">
    <property type="protein sequence ID" value="AAP48063.1"/>
    <property type="molecule type" value="Genomic_DNA"/>
</dbReference>
<dbReference type="EMBL" id="AY289068">
    <property type="protein sequence ID" value="AAP48102.1"/>
    <property type="molecule type" value="Genomic_DNA"/>
</dbReference>
<dbReference type="EMBL" id="AY289069">
    <property type="protein sequence ID" value="AAP48115.1"/>
    <property type="molecule type" value="Genomic_DNA"/>
</dbReference>
<dbReference type="EMBL" id="AY289071">
    <property type="protein sequence ID" value="AAP48141.1"/>
    <property type="molecule type" value="Genomic_DNA"/>
</dbReference>
<dbReference type="EMBL" id="AY289072">
    <property type="protein sequence ID" value="AAP48154.1"/>
    <property type="molecule type" value="Genomic_DNA"/>
</dbReference>
<dbReference type="EMBL" id="AY289073">
    <property type="protein sequence ID" value="AAP48167.1"/>
    <property type="molecule type" value="Genomic_DNA"/>
</dbReference>
<dbReference type="EMBL" id="AY289074">
    <property type="protein sequence ID" value="AAP48180.1"/>
    <property type="molecule type" value="Genomic_DNA"/>
</dbReference>
<dbReference type="EMBL" id="AY289076">
    <property type="protein sequence ID" value="AAP48206.1"/>
    <property type="molecule type" value="Genomic_DNA"/>
</dbReference>
<dbReference type="EMBL" id="AY289077">
    <property type="protein sequence ID" value="AAP48219.1"/>
    <property type="molecule type" value="Genomic_DNA"/>
</dbReference>
<dbReference type="EMBL" id="AY289079">
    <property type="protein sequence ID" value="AAP48245.1"/>
    <property type="molecule type" value="Genomic_DNA"/>
</dbReference>
<dbReference type="EMBL" id="AY289083">
    <property type="protein sequence ID" value="AAP48297.1"/>
    <property type="molecule type" value="Genomic_DNA"/>
</dbReference>
<dbReference type="EMBL" id="AY289084">
    <property type="protein sequence ID" value="AAP48310.1"/>
    <property type="molecule type" value="Genomic_DNA"/>
</dbReference>
<dbReference type="EMBL" id="AY289086">
    <property type="protein sequence ID" value="AAP48336.1"/>
    <property type="molecule type" value="Genomic_DNA"/>
</dbReference>
<dbReference type="EMBL" id="AY289087">
    <property type="protein sequence ID" value="AAP48349.1"/>
    <property type="molecule type" value="Genomic_DNA"/>
</dbReference>
<dbReference type="EMBL" id="AY289088">
    <property type="protein sequence ID" value="AAP48362.1"/>
    <property type="molecule type" value="Genomic_DNA"/>
</dbReference>
<dbReference type="EMBL" id="AY289089">
    <property type="protein sequence ID" value="AAP48375.1"/>
    <property type="molecule type" value="Genomic_DNA"/>
</dbReference>
<dbReference type="EMBL" id="AY289091">
    <property type="protein sequence ID" value="AAP48401.1"/>
    <property type="molecule type" value="Genomic_DNA"/>
</dbReference>
<dbReference type="EMBL" id="AY289092">
    <property type="protein sequence ID" value="AAP48414.1"/>
    <property type="molecule type" value="Genomic_DNA"/>
</dbReference>
<dbReference type="EMBL" id="AY289094">
    <property type="protein sequence ID" value="AAP48439.1"/>
    <property type="molecule type" value="Genomic_DNA"/>
</dbReference>
<dbReference type="EMBL" id="AY289099">
    <property type="protein sequence ID" value="AAP48504.1"/>
    <property type="molecule type" value="Genomic_DNA"/>
</dbReference>
<dbReference type="EMBL" id="AY289100">
    <property type="protein sequence ID" value="AAP48517.1"/>
    <property type="molecule type" value="Genomic_DNA"/>
</dbReference>
<dbReference type="EMBL" id="AY289101">
    <property type="protein sequence ID" value="AAP48530.1"/>
    <property type="molecule type" value="Genomic_DNA"/>
</dbReference>
<dbReference type="EMBL" id="AY289102">
    <property type="protein sequence ID" value="AAP48543.1"/>
    <property type="molecule type" value="Genomic_DNA"/>
</dbReference>
<dbReference type="EMBL" id="AY495090">
    <property type="protein sequence ID" value="AAR92497.1"/>
    <property type="molecule type" value="Genomic_DNA"/>
</dbReference>
<dbReference type="EMBL" id="AY495091">
    <property type="protein sequence ID" value="AAR92510.1"/>
    <property type="molecule type" value="Genomic_DNA"/>
</dbReference>
<dbReference type="EMBL" id="AY495092">
    <property type="protein sequence ID" value="AAR92523.1"/>
    <property type="molecule type" value="Genomic_DNA"/>
</dbReference>
<dbReference type="EMBL" id="AY495093">
    <property type="protein sequence ID" value="AAR92536.1"/>
    <property type="molecule type" value="Genomic_DNA"/>
</dbReference>
<dbReference type="EMBL" id="AY495095">
    <property type="protein sequence ID" value="AAR92562.1"/>
    <property type="molecule type" value="Genomic_DNA"/>
</dbReference>
<dbReference type="EMBL" id="AY495096">
    <property type="protein sequence ID" value="AAR92575.1"/>
    <property type="molecule type" value="Genomic_DNA"/>
</dbReference>
<dbReference type="EMBL" id="AY495097">
    <property type="protein sequence ID" value="AAR92588.1"/>
    <property type="molecule type" value="Genomic_DNA"/>
</dbReference>
<dbReference type="EMBL" id="AY495098">
    <property type="protein sequence ID" value="AAR92601.1"/>
    <property type="molecule type" value="Genomic_DNA"/>
</dbReference>
<dbReference type="EMBL" id="AY495099">
    <property type="protein sequence ID" value="AAR92614.1"/>
    <property type="molecule type" value="Genomic_DNA"/>
</dbReference>
<dbReference type="EMBL" id="AY495100">
    <property type="protein sequence ID" value="AAR92627.1"/>
    <property type="molecule type" value="Genomic_DNA"/>
</dbReference>
<dbReference type="EMBL" id="AY495101">
    <property type="protein sequence ID" value="AAR92640.1"/>
    <property type="molecule type" value="Genomic_DNA"/>
</dbReference>
<dbReference type="EMBL" id="AY495102">
    <property type="protein sequence ID" value="AAR92653.1"/>
    <property type="molecule type" value="Genomic_DNA"/>
</dbReference>
<dbReference type="EMBL" id="AY495103">
    <property type="protein sequence ID" value="AAR92666.1"/>
    <property type="molecule type" value="Genomic_DNA"/>
</dbReference>
<dbReference type="EMBL" id="AY495104">
    <property type="protein sequence ID" value="AAR92679.1"/>
    <property type="molecule type" value="Genomic_DNA"/>
</dbReference>
<dbReference type="EMBL" id="AY495105">
    <property type="protein sequence ID" value="AAR92692.1"/>
    <property type="molecule type" value="Genomic_DNA"/>
</dbReference>
<dbReference type="EMBL" id="AY495106">
    <property type="protein sequence ID" value="AAR92705.1"/>
    <property type="molecule type" value="Genomic_DNA"/>
</dbReference>
<dbReference type="EMBL" id="AY495107">
    <property type="protein sequence ID" value="AAR92718.1"/>
    <property type="molecule type" value="Genomic_DNA"/>
</dbReference>
<dbReference type="EMBL" id="AY495108">
    <property type="protein sequence ID" value="AAR92731.1"/>
    <property type="molecule type" value="Genomic_DNA"/>
</dbReference>
<dbReference type="EMBL" id="AY495109">
    <property type="protein sequence ID" value="AAR92744.1"/>
    <property type="molecule type" value="Genomic_DNA"/>
</dbReference>
<dbReference type="EMBL" id="AY495110">
    <property type="protein sequence ID" value="AAR92757.1"/>
    <property type="molecule type" value="Genomic_DNA"/>
</dbReference>
<dbReference type="EMBL" id="AY495111">
    <property type="protein sequence ID" value="AAR92770.1"/>
    <property type="molecule type" value="Genomic_DNA"/>
</dbReference>
<dbReference type="EMBL" id="AY495113">
    <property type="protein sequence ID" value="AAR92796.1"/>
    <property type="molecule type" value="Genomic_DNA"/>
</dbReference>
<dbReference type="EMBL" id="AY495114">
    <property type="protein sequence ID" value="AAR92809.1"/>
    <property type="molecule type" value="Genomic_DNA"/>
</dbReference>
<dbReference type="EMBL" id="AY495115">
    <property type="protein sequence ID" value="AAR92822.1"/>
    <property type="molecule type" value="Genomic_DNA"/>
</dbReference>
<dbReference type="EMBL" id="AY495116">
    <property type="protein sequence ID" value="AAR92835.1"/>
    <property type="molecule type" value="Genomic_DNA"/>
</dbReference>
<dbReference type="EMBL" id="AY495117">
    <property type="protein sequence ID" value="AAR92848.1"/>
    <property type="molecule type" value="Genomic_DNA"/>
</dbReference>
<dbReference type="EMBL" id="AY495118">
    <property type="protein sequence ID" value="AAR92861.1"/>
    <property type="molecule type" value="Genomic_DNA"/>
</dbReference>
<dbReference type="EMBL" id="AY495119">
    <property type="protein sequence ID" value="AAR92874.1"/>
    <property type="molecule type" value="Genomic_DNA"/>
</dbReference>
<dbReference type="EMBL" id="AY495120">
    <property type="protein sequence ID" value="AAR92887.1"/>
    <property type="molecule type" value="Genomic_DNA"/>
</dbReference>
<dbReference type="EMBL" id="AY495121">
    <property type="protein sequence ID" value="AAR92900.1"/>
    <property type="molecule type" value="Genomic_DNA"/>
</dbReference>
<dbReference type="EMBL" id="AY495122">
    <property type="protein sequence ID" value="AAR92913.1"/>
    <property type="molecule type" value="Genomic_DNA"/>
</dbReference>
<dbReference type="EMBL" id="AY495123">
    <property type="protein sequence ID" value="AAR92926.1"/>
    <property type="molecule type" value="Genomic_DNA"/>
</dbReference>
<dbReference type="EMBL" id="AY495124">
    <property type="protein sequence ID" value="AAR92939.1"/>
    <property type="molecule type" value="Genomic_DNA"/>
</dbReference>
<dbReference type="EMBL" id="AY495125">
    <property type="protein sequence ID" value="AAR92952.1"/>
    <property type="molecule type" value="Genomic_DNA"/>
</dbReference>
<dbReference type="EMBL" id="AY495126">
    <property type="protein sequence ID" value="AAR92965.1"/>
    <property type="molecule type" value="Genomic_DNA"/>
</dbReference>
<dbReference type="EMBL" id="AY495127">
    <property type="protein sequence ID" value="AAR92978.1"/>
    <property type="molecule type" value="Genomic_DNA"/>
</dbReference>
<dbReference type="EMBL" id="AY495128">
    <property type="protein sequence ID" value="AAR92991.1"/>
    <property type="molecule type" value="Genomic_DNA"/>
</dbReference>
<dbReference type="EMBL" id="AY495129">
    <property type="protein sequence ID" value="AAR93004.1"/>
    <property type="molecule type" value="Genomic_DNA"/>
</dbReference>
<dbReference type="EMBL" id="AY495130">
    <property type="protein sequence ID" value="AAR93017.1"/>
    <property type="molecule type" value="Genomic_DNA"/>
</dbReference>
<dbReference type="EMBL" id="AY495131">
    <property type="protein sequence ID" value="AAR93030.1"/>
    <property type="molecule type" value="Genomic_DNA"/>
</dbReference>
<dbReference type="EMBL" id="AY495132">
    <property type="protein sequence ID" value="AAR93043.1"/>
    <property type="molecule type" value="Genomic_DNA"/>
</dbReference>
<dbReference type="EMBL" id="AY495133">
    <property type="protein sequence ID" value="AAR93056.1"/>
    <property type="molecule type" value="Genomic_DNA"/>
</dbReference>
<dbReference type="EMBL" id="AY495135">
    <property type="protein sequence ID" value="AAR93082.1"/>
    <property type="molecule type" value="Genomic_DNA"/>
</dbReference>
<dbReference type="EMBL" id="AY495136">
    <property type="protein sequence ID" value="AAR93095.1"/>
    <property type="molecule type" value="Genomic_DNA"/>
</dbReference>
<dbReference type="EMBL" id="AY495137">
    <property type="protein sequence ID" value="AAR93108.1"/>
    <property type="molecule type" value="Genomic_DNA"/>
</dbReference>
<dbReference type="EMBL" id="AY495138">
    <property type="protein sequence ID" value="AAR93121.1"/>
    <property type="molecule type" value="Genomic_DNA"/>
</dbReference>
<dbReference type="EMBL" id="AY495139">
    <property type="protein sequence ID" value="AAR93134.1"/>
    <property type="molecule type" value="Genomic_DNA"/>
</dbReference>
<dbReference type="EMBL" id="AY495140">
    <property type="protein sequence ID" value="AAR93147.1"/>
    <property type="molecule type" value="Genomic_DNA"/>
</dbReference>
<dbReference type="EMBL" id="AY495141">
    <property type="protein sequence ID" value="AAR93160.1"/>
    <property type="molecule type" value="Genomic_DNA"/>
</dbReference>
<dbReference type="EMBL" id="AY495142">
    <property type="protein sequence ID" value="AAR93173.1"/>
    <property type="molecule type" value="Genomic_DNA"/>
</dbReference>
<dbReference type="EMBL" id="AY495143">
    <property type="protein sequence ID" value="AAR93186.1"/>
    <property type="molecule type" value="Genomic_DNA"/>
</dbReference>
<dbReference type="EMBL" id="AY495144">
    <property type="protein sequence ID" value="AAR93199.1"/>
    <property type="molecule type" value="Genomic_DNA"/>
</dbReference>
<dbReference type="EMBL" id="AY495145">
    <property type="protein sequence ID" value="AAR93212.1"/>
    <property type="molecule type" value="Genomic_DNA"/>
</dbReference>
<dbReference type="EMBL" id="AY495146">
    <property type="protein sequence ID" value="AAR93225.1"/>
    <property type="molecule type" value="Genomic_DNA"/>
</dbReference>
<dbReference type="EMBL" id="AY495147">
    <property type="protein sequence ID" value="AAR93238.1"/>
    <property type="molecule type" value="Genomic_DNA"/>
</dbReference>
<dbReference type="EMBL" id="AY495148">
    <property type="protein sequence ID" value="AAR93251.1"/>
    <property type="molecule type" value="Genomic_DNA"/>
</dbReference>
<dbReference type="EMBL" id="AY495149">
    <property type="protein sequence ID" value="AAR93264.1"/>
    <property type="molecule type" value="Genomic_DNA"/>
</dbReference>
<dbReference type="EMBL" id="AY495150">
    <property type="protein sequence ID" value="AAR93277.1"/>
    <property type="molecule type" value="Genomic_DNA"/>
</dbReference>
<dbReference type="EMBL" id="AY495151">
    <property type="protein sequence ID" value="AAR93290.1"/>
    <property type="molecule type" value="Genomic_DNA"/>
</dbReference>
<dbReference type="EMBL" id="AY495152">
    <property type="protein sequence ID" value="AAR93303.1"/>
    <property type="molecule type" value="Genomic_DNA"/>
</dbReference>
<dbReference type="EMBL" id="AY495153">
    <property type="protein sequence ID" value="AAR93316.1"/>
    <property type="molecule type" value="Genomic_DNA"/>
</dbReference>
<dbReference type="EMBL" id="AY495154">
    <property type="protein sequence ID" value="AAR93329.1"/>
    <property type="molecule type" value="Genomic_DNA"/>
</dbReference>
<dbReference type="EMBL" id="AY495155">
    <property type="protein sequence ID" value="AAR93342.1"/>
    <property type="molecule type" value="Genomic_DNA"/>
</dbReference>
<dbReference type="EMBL" id="AY495156">
    <property type="protein sequence ID" value="AAR93355.1"/>
    <property type="molecule type" value="Genomic_DNA"/>
</dbReference>
<dbReference type="EMBL" id="AY495157">
    <property type="protein sequence ID" value="AAR93368.1"/>
    <property type="molecule type" value="Genomic_DNA"/>
</dbReference>
<dbReference type="EMBL" id="AY495158">
    <property type="protein sequence ID" value="AAR93381.1"/>
    <property type="molecule type" value="Genomic_DNA"/>
</dbReference>
<dbReference type="EMBL" id="AY495159">
    <property type="protein sequence ID" value="AAR93394.1"/>
    <property type="molecule type" value="Genomic_DNA"/>
</dbReference>
<dbReference type="EMBL" id="AY495160">
    <property type="protein sequence ID" value="AAR93407.1"/>
    <property type="molecule type" value="Genomic_DNA"/>
</dbReference>
<dbReference type="EMBL" id="AY495161">
    <property type="protein sequence ID" value="AAR93420.1"/>
    <property type="molecule type" value="Genomic_DNA"/>
</dbReference>
<dbReference type="EMBL" id="AY495162">
    <property type="protein sequence ID" value="AAR93433.1"/>
    <property type="molecule type" value="Genomic_DNA"/>
</dbReference>
<dbReference type="EMBL" id="AY495163">
    <property type="protein sequence ID" value="AAR93446.1"/>
    <property type="molecule type" value="Genomic_DNA"/>
</dbReference>
<dbReference type="EMBL" id="AY495164">
    <property type="protein sequence ID" value="AAR93459.1"/>
    <property type="molecule type" value="Genomic_DNA"/>
</dbReference>
<dbReference type="EMBL" id="AY495165">
    <property type="protein sequence ID" value="AAR93472.1"/>
    <property type="molecule type" value="Genomic_DNA"/>
</dbReference>
<dbReference type="EMBL" id="AY495166">
    <property type="protein sequence ID" value="AAR93485.1"/>
    <property type="molecule type" value="Genomic_DNA"/>
</dbReference>
<dbReference type="EMBL" id="AY495167">
    <property type="protein sequence ID" value="AAR93498.1"/>
    <property type="molecule type" value="Genomic_DNA"/>
</dbReference>
<dbReference type="EMBL" id="AY495168">
    <property type="protein sequence ID" value="AAR93511.1"/>
    <property type="molecule type" value="Genomic_DNA"/>
</dbReference>
<dbReference type="EMBL" id="AY495169">
    <property type="protein sequence ID" value="AAR93524.1"/>
    <property type="molecule type" value="Genomic_DNA"/>
</dbReference>
<dbReference type="EMBL" id="AY495170">
    <property type="protein sequence ID" value="AAR93537.1"/>
    <property type="molecule type" value="Genomic_DNA"/>
</dbReference>
<dbReference type="EMBL" id="AY495171">
    <property type="protein sequence ID" value="AAR93550.1"/>
    <property type="molecule type" value="Genomic_DNA"/>
</dbReference>
<dbReference type="EMBL" id="AY495172">
    <property type="protein sequence ID" value="AAR93563.1"/>
    <property type="molecule type" value="Genomic_DNA"/>
</dbReference>
<dbReference type="EMBL" id="AY495173">
    <property type="protein sequence ID" value="AAR93576.1"/>
    <property type="molecule type" value="Genomic_DNA"/>
</dbReference>
<dbReference type="EMBL" id="AY495174">
    <property type="protein sequence ID" value="AAR93589.1"/>
    <property type="molecule type" value="Genomic_DNA"/>
</dbReference>
<dbReference type="EMBL" id="AY495175">
    <property type="protein sequence ID" value="AAR93602.1"/>
    <property type="molecule type" value="Genomic_DNA"/>
</dbReference>
<dbReference type="EMBL" id="AY495176">
    <property type="protein sequence ID" value="AAR93615.1"/>
    <property type="molecule type" value="Genomic_DNA"/>
</dbReference>
<dbReference type="EMBL" id="AY495177">
    <property type="protein sequence ID" value="AAR93628.1"/>
    <property type="molecule type" value="Genomic_DNA"/>
</dbReference>
<dbReference type="EMBL" id="AY495178">
    <property type="protein sequence ID" value="AAR93641.1"/>
    <property type="molecule type" value="Genomic_DNA"/>
</dbReference>
<dbReference type="EMBL" id="AY495179">
    <property type="protein sequence ID" value="AAR93654.1"/>
    <property type="molecule type" value="Genomic_DNA"/>
</dbReference>
<dbReference type="EMBL" id="AY495180">
    <property type="protein sequence ID" value="AAR93667.1"/>
    <property type="molecule type" value="Genomic_DNA"/>
</dbReference>
<dbReference type="EMBL" id="AY495181">
    <property type="protein sequence ID" value="AAR93680.1"/>
    <property type="molecule type" value="Genomic_DNA"/>
</dbReference>
<dbReference type="EMBL" id="AY495182">
    <property type="protein sequence ID" value="AAR93693.1"/>
    <property type="molecule type" value="Genomic_DNA"/>
</dbReference>
<dbReference type="EMBL" id="AY495183">
    <property type="protein sequence ID" value="AAR93706.1"/>
    <property type="molecule type" value="Genomic_DNA"/>
</dbReference>
<dbReference type="EMBL" id="AY495184">
    <property type="protein sequence ID" value="AAR93719.1"/>
    <property type="molecule type" value="Genomic_DNA"/>
</dbReference>
<dbReference type="EMBL" id="AY495185">
    <property type="protein sequence ID" value="AAR93732.1"/>
    <property type="molecule type" value="Genomic_DNA"/>
</dbReference>
<dbReference type="EMBL" id="AY495186">
    <property type="protein sequence ID" value="AAR93745.1"/>
    <property type="molecule type" value="Genomic_DNA"/>
</dbReference>
<dbReference type="EMBL" id="AY495187">
    <property type="protein sequence ID" value="AAR93758.1"/>
    <property type="molecule type" value="Genomic_DNA"/>
</dbReference>
<dbReference type="EMBL" id="AY495188">
    <property type="protein sequence ID" value="AAR93771.1"/>
    <property type="molecule type" value="Genomic_DNA"/>
</dbReference>
<dbReference type="EMBL" id="AY495190">
    <property type="protein sequence ID" value="AAR93797.1"/>
    <property type="molecule type" value="Genomic_DNA"/>
</dbReference>
<dbReference type="EMBL" id="AY495191">
    <property type="protein sequence ID" value="AAR93810.1"/>
    <property type="molecule type" value="Genomic_DNA"/>
</dbReference>
<dbReference type="EMBL" id="AY495192">
    <property type="protein sequence ID" value="AAR93823.1"/>
    <property type="molecule type" value="Genomic_DNA"/>
</dbReference>
<dbReference type="EMBL" id="AY495194">
    <property type="protein sequence ID" value="AAR93849.1"/>
    <property type="molecule type" value="Genomic_DNA"/>
</dbReference>
<dbReference type="EMBL" id="AY495195">
    <property type="protein sequence ID" value="AAR93862.1"/>
    <property type="molecule type" value="Genomic_DNA"/>
</dbReference>
<dbReference type="EMBL" id="AY495196">
    <property type="protein sequence ID" value="AAR93875.1"/>
    <property type="molecule type" value="Genomic_DNA"/>
</dbReference>
<dbReference type="EMBL" id="AY495197">
    <property type="protein sequence ID" value="AAR93888.1"/>
    <property type="molecule type" value="Genomic_DNA"/>
</dbReference>
<dbReference type="EMBL" id="AY495198">
    <property type="protein sequence ID" value="AAR93901.1"/>
    <property type="molecule type" value="Genomic_DNA"/>
</dbReference>
<dbReference type="EMBL" id="AY495199">
    <property type="protein sequence ID" value="AAR93914.1"/>
    <property type="molecule type" value="Genomic_DNA"/>
</dbReference>
<dbReference type="EMBL" id="AY495200">
    <property type="protein sequence ID" value="AAR93927.1"/>
    <property type="molecule type" value="Genomic_DNA"/>
</dbReference>
<dbReference type="EMBL" id="AY495201">
    <property type="protein sequence ID" value="AAR93940.1"/>
    <property type="molecule type" value="Genomic_DNA"/>
</dbReference>
<dbReference type="EMBL" id="AY495202">
    <property type="protein sequence ID" value="AAR93953.1"/>
    <property type="molecule type" value="Genomic_DNA"/>
</dbReference>
<dbReference type="EMBL" id="AY495203">
    <property type="protein sequence ID" value="AAR93966.1"/>
    <property type="molecule type" value="Genomic_DNA"/>
</dbReference>
<dbReference type="EMBL" id="AY495204">
    <property type="protein sequence ID" value="AAR93979.1"/>
    <property type="molecule type" value="Genomic_DNA"/>
</dbReference>
<dbReference type="EMBL" id="AY495205">
    <property type="protein sequence ID" value="AAR93992.1"/>
    <property type="molecule type" value="Genomic_DNA"/>
</dbReference>
<dbReference type="EMBL" id="AY495206">
    <property type="protein sequence ID" value="AAR94005.1"/>
    <property type="molecule type" value="Genomic_DNA"/>
</dbReference>
<dbReference type="EMBL" id="AY495207">
    <property type="protein sequence ID" value="AAR94018.1"/>
    <property type="molecule type" value="Genomic_DNA"/>
</dbReference>
<dbReference type="EMBL" id="AY495208">
    <property type="protein sequence ID" value="AAR94031.1"/>
    <property type="molecule type" value="Genomic_DNA"/>
</dbReference>
<dbReference type="EMBL" id="AY495209">
    <property type="protein sequence ID" value="AAR94044.1"/>
    <property type="molecule type" value="Genomic_DNA"/>
</dbReference>
<dbReference type="EMBL" id="AY495210">
    <property type="protein sequence ID" value="AAR94057.1"/>
    <property type="molecule type" value="Genomic_DNA"/>
</dbReference>
<dbReference type="EMBL" id="AY495211">
    <property type="protein sequence ID" value="AAR94070.1"/>
    <property type="molecule type" value="Genomic_DNA"/>
</dbReference>
<dbReference type="EMBL" id="AY495212">
    <property type="protein sequence ID" value="AAR94083.1"/>
    <property type="molecule type" value="Genomic_DNA"/>
</dbReference>
<dbReference type="EMBL" id="AY495213">
    <property type="protein sequence ID" value="AAR94096.1"/>
    <property type="molecule type" value="Genomic_DNA"/>
</dbReference>
<dbReference type="EMBL" id="AY495215">
    <property type="protein sequence ID" value="AAR94122.1"/>
    <property type="molecule type" value="Genomic_DNA"/>
</dbReference>
<dbReference type="EMBL" id="AY495216">
    <property type="protein sequence ID" value="AAR94135.1"/>
    <property type="molecule type" value="Genomic_DNA"/>
</dbReference>
<dbReference type="EMBL" id="AY495217">
    <property type="protein sequence ID" value="AAR94148.1"/>
    <property type="molecule type" value="Genomic_DNA"/>
</dbReference>
<dbReference type="EMBL" id="AY495218">
    <property type="protein sequence ID" value="AAR94161.1"/>
    <property type="molecule type" value="Genomic_DNA"/>
</dbReference>
<dbReference type="EMBL" id="AY495219">
    <property type="protein sequence ID" value="AAR94174.1"/>
    <property type="molecule type" value="Genomic_DNA"/>
</dbReference>
<dbReference type="EMBL" id="AY495220">
    <property type="protein sequence ID" value="AAR94187.1"/>
    <property type="molecule type" value="Genomic_DNA"/>
</dbReference>
<dbReference type="EMBL" id="AY495221">
    <property type="protein sequence ID" value="AAR94200.1"/>
    <property type="molecule type" value="Genomic_DNA"/>
</dbReference>
<dbReference type="EMBL" id="AY495222">
    <property type="protein sequence ID" value="AAR94213.1"/>
    <property type="molecule type" value="Genomic_DNA"/>
</dbReference>
<dbReference type="EMBL" id="AY495223">
    <property type="protein sequence ID" value="AAR94226.1"/>
    <property type="molecule type" value="Genomic_DNA"/>
</dbReference>
<dbReference type="EMBL" id="AY495224">
    <property type="protein sequence ID" value="AAR94239.1"/>
    <property type="molecule type" value="Genomic_DNA"/>
</dbReference>
<dbReference type="EMBL" id="AY495225">
    <property type="protein sequence ID" value="AAR94252.1"/>
    <property type="molecule type" value="Genomic_DNA"/>
</dbReference>
<dbReference type="EMBL" id="AY495226">
    <property type="protein sequence ID" value="AAR94265.1"/>
    <property type="molecule type" value="Genomic_DNA"/>
</dbReference>
<dbReference type="EMBL" id="AY495227">
    <property type="protein sequence ID" value="AAR94278.1"/>
    <property type="molecule type" value="Genomic_DNA"/>
</dbReference>
<dbReference type="EMBL" id="AY495228">
    <property type="protein sequence ID" value="AAR94291.1"/>
    <property type="molecule type" value="Genomic_DNA"/>
</dbReference>
<dbReference type="EMBL" id="AY495229">
    <property type="protein sequence ID" value="AAR94304.1"/>
    <property type="molecule type" value="Genomic_DNA"/>
</dbReference>
<dbReference type="EMBL" id="AY495230">
    <property type="protein sequence ID" value="AAR94317.1"/>
    <property type="molecule type" value="Genomic_DNA"/>
</dbReference>
<dbReference type="EMBL" id="AY495243">
    <property type="protein sequence ID" value="AAR94486.1"/>
    <property type="molecule type" value="Genomic_DNA"/>
</dbReference>
<dbReference type="EMBL" id="AY495245">
    <property type="protein sequence ID" value="AAR94512.1"/>
    <property type="molecule type" value="Genomic_DNA"/>
</dbReference>
<dbReference type="EMBL" id="AY495250">
    <property type="protein sequence ID" value="AAR94577.1"/>
    <property type="molecule type" value="Genomic_DNA"/>
</dbReference>
<dbReference type="EMBL" id="AY495251">
    <property type="protein sequence ID" value="AAR94590.1"/>
    <property type="molecule type" value="Genomic_DNA"/>
</dbReference>
<dbReference type="EMBL" id="AY495253">
    <property type="protein sequence ID" value="AAR94616.1"/>
    <property type="molecule type" value="Genomic_DNA"/>
</dbReference>
<dbReference type="EMBL" id="AY495254">
    <property type="protein sequence ID" value="AAR94629.1"/>
    <property type="molecule type" value="Genomic_DNA"/>
</dbReference>
<dbReference type="EMBL" id="AY495255">
    <property type="protein sequence ID" value="AAR94642.1"/>
    <property type="molecule type" value="Genomic_DNA"/>
</dbReference>
<dbReference type="EMBL" id="AY495256">
    <property type="protein sequence ID" value="AAR94655.1"/>
    <property type="molecule type" value="Genomic_DNA"/>
</dbReference>
<dbReference type="EMBL" id="AY495258">
    <property type="protein sequence ID" value="AAR94681.1"/>
    <property type="molecule type" value="Genomic_DNA"/>
</dbReference>
<dbReference type="EMBL" id="AY495259">
    <property type="protein sequence ID" value="AAR94694.1"/>
    <property type="molecule type" value="Genomic_DNA"/>
</dbReference>
<dbReference type="EMBL" id="AY495260">
    <property type="protein sequence ID" value="AAR94707.1"/>
    <property type="molecule type" value="Genomic_DNA"/>
</dbReference>
<dbReference type="EMBL" id="AY495261">
    <property type="protein sequence ID" value="AAR94720.1"/>
    <property type="molecule type" value="Genomic_DNA"/>
</dbReference>
<dbReference type="EMBL" id="AY495262">
    <property type="protein sequence ID" value="AAR94733.1"/>
    <property type="molecule type" value="Genomic_DNA"/>
</dbReference>
<dbReference type="EMBL" id="AY495263">
    <property type="protein sequence ID" value="AAR94746.1"/>
    <property type="molecule type" value="Genomic_DNA"/>
</dbReference>
<dbReference type="EMBL" id="AY495264">
    <property type="protein sequence ID" value="AAR94759.1"/>
    <property type="molecule type" value="Genomic_DNA"/>
</dbReference>
<dbReference type="EMBL" id="AY495265">
    <property type="protein sequence ID" value="AAR94772.1"/>
    <property type="molecule type" value="Genomic_DNA"/>
</dbReference>
<dbReference type="EMBL" id="AY495266">
    <property type="protein sequence ID" value="AAR94785.1"/>
    <property type="molecule type" value="Genomic_DNA"/>
</dbReference>
<dbReference type="EMBL" id="AY495306">
    <property type="protein sequence ID" value="AAR95305.1"/>
    <property type="molecule type" value="Genomic_DNA"/>
</dbReference>
<dbReference type="EMBL" id="AY495307">
    <property type="protein sequence ID" value="AAR95318.1"/>
    <property type="molecule type" value="Genomic_DNA"/>
</dbReference>
<dbReference type="EMBL" id="AY495308">
    <property type="protein sequence ID" value="AAR95331.1"/>
    <property type="molecule type" value="Genomic_DNA"/>
</dbReference>
<dbReference type="EMBL" id="AY495309">
    <property type="protein sequence ID" value="AAR95344.1"/>
    <property type="molecule type" value="Genomic_DNA"/>
</dbReference>
<dbReference type="EMBL" id="AY495310">
    <property type="protein sequence ID" value="AAR95357.1"/>
    <property type="molecule type" value="Genomic_DNA"/>
</dbReference>
<dbReference type="EMBL" id="AY495311">
    <property type="protein sequence ID" value="AAR95370.1"/>
    <property type="molecule type" value="Genomic_DNA"/>
</dbReference>
<dbReference type="EMBL" id="AY495312">
    <property type="protein sequence ID" value="AAR95383.1"/>
    <property type="molecule type" value="Genomic_DNA"/>
</dbReference>
<dbReference type="EMBL" id="AY495313">
    <property type="protein sequence ID" value="AAR95396.1"/>
    <property type="molecule type" value="Genomic_DNA"/>
</dbReference>
<dbReference type="EMBL" id="AY495314">
    <property type="protein sequence ID" value="AAR95409.1"/>
    <property type="molecule type" value="Genomic_DNA"/>
</dbReference>
<dbReference type="EMBL" id="AY495315">
    <property type="protein sequence ID" value="AAR95422.1"/>
    <property type="molecule type" value="Genomic_DNA"/>
</dbReference>
<dbReference type="EMBL" id="AY495316">
    <property type="protein sequence ID" value="AAR95435.1"/>
    <property type="molecule type" value="Genomic_DNA"/>
</dbReference>
<dbReference type="EMBL" id="AY495317">
    <property type="protein sequence ID" value="AAR95448.1"/>
    <property type="molecule type" value="Genomic_DNA"/>
</dbReference>
<dbReference type="EMBL" id="AY495318">
    <property type="protein sequence ID" value="AAR95461.1"/>
    <property type="molecule type" value="Genomic_DNA"/>
</dbReference>
<dbReference type="EMBL" id="AY495319">
    <property type="protein sequence ID" value="AAR95474.1"/>
    <property type="molecule type" value="Genomic_DNA"/>
</dbReference>
<dbReference type="EMBL" id="AY495320">
    <property type="protein sequence ID" value="AAR95487.1"/>
    <property type="molecule type" value="Genomic_DNA"/>
</dbReference>
<dbReference type="EMBL" id="AY495321">
    <property type="protein sequence ID" value="AAR95500.1"/>
    <property type="molecule type" value="Genomic_DNA"/>
</dbReference>
<dbReference type="EMBL" id="AY495322">
    <property type="protein sequence ID" value="AAR95513.1"/>
    <property type="molecule type" value="Genomic_DNA"/>
</dbReference>
<dbReference type="EMBL" id="AY495323">
    <property type="protein sequence ID" value="AAR95526.1"/>
    <property type="molecule type" value="Genomic_DNA"/>
</dbReference>
<dbReference type="EMBL" id="AY495326">
    <property type="protein sequence ID" value="AAR95565.1"/>
    <property type="molecule type" value="Genomic_DNA"/>
</dbReference>
<dbReference type="EMBL" id="AY495327">
    <property type="protein sequence ID" value="AAR95578.1"/>
    <property type="molecule type" value="Genomic_DNA"/>
</dbReference>
<dbReference type="EMBL" id="AY495328">
    <property type="protein sequence ID" value="AAR95591.1"/>
    <property type="molecule type" value="Genomic_DNA"/>
</dbReference>
<dbReference type="EMBL" id="AY495329">
    <property type="protein sequence ID" value="AAR95604.1"/>
    <property type="molecule type" value="Genomic_DNA"/>
</dbReference>
<dbReference type="EMBL" id="AY495330">
    <property type="protein sequence ID" value="AAR95617.1"/>
    <property type="molecule type" value="Genomic_DNA"/>
</dbReference>
<dbReference type="EMBL" id="AY495302">
    <property type="protein sequence ID" value="AAR95253.1"/>
    <property type="molecule type" value="Genomic_DNA"/>
</dbReference>
<dbReference type="PIR" id="A00414">
    <property type="entry name" value="DNHUN2"/>
</dbReference>
<dbReference type="RefSeq" id="YP_003024027.1">
    <property type="nucleotide sequence ID" value="NC_012920.1"/>
</dbReference>
<dbReference type="PDB" id="5XTC">
    <property type="method" value="EM"/>
    <property type="resolution" value="3.70 A"/>
    <property type="chains" value="i=1-347"/>
</dbReference>
<dbReference type="PDB" id="5XTD">
    <property type="method" value="EM"/>
    <property type="resolution" value="3.70 A"/>
    <property type="chains" value="i=1-347"/>
</dbReference>
<dbReference type="PDB" id="5XTH">
    <property type="method" value="EM"/>
    <property type="resolution" value="3.90 A"/>
    <property type="chains" value="i=1-347"/>
</dbReference>
<dbReference type="PDB" id="5XTI">
    <property type="method" value="EM"/>
    <property type="resolution" value="17.40 A"/>
    <property type="chains" value="Bi/i=1-347"/>
</dbReference>
<dbReference type="PDBsum" id="5XTC"/>
<dbReference type="PDBsum" id="5XTD"/>
<dbReference type="PDBsum" id="5XTH"/>
<dbReference type="PDBsum" id="5XTI"/>
<dbReference type="SMR" id="P03891"/>
<dbReference type="BioGRID" id="110632">
    <property type="interactions" value="25"/>
</dbReference>
<dbReference type="ComplexPortal" id="CPX-577">
    <property type="entry name" value="Mitochondrial respiratory chain complex I"/>
</dbReference>
<dbReference type="CORUM" id="P03891"/>
<dbReference type="FunCoup" id="P03891">
    <property type="interactions" value="260"/>
</dbReference>
<dbReference type="IntAct" id="P03891">
    <property type="interactions" value="16"/>
</dbReference>
<dbReference type="MINT" id="P03891"/>
<dbReference type="STRING" id="9606.ENSP00000355046"/>
<dbReference type="BindingDB" id="P03891"/>
<dbReference type="ChEMBL" id="CHEMBL2363065"/>
<dbReference type="DrugBank" id="DB00157">
    <property type="generic name" value="NADH"/>
</dbReference>
<dbReference type="DrugCentral" id="P03891"/>
<dbReference type="iPTMnet" id="P03891"/>
<dbReference type="PhosphoSitePlus" id="P03891"/>
<dbReference type="BioMuta" id="MT-ND2"/>
<dbReference type="DMDM" id="128676"/>
<dbReference type="jPOST" id="P03891"/>
<dbReference type="MassIVE" id="P03891"/>
<dbReference type="PaxDb" id="9606-ENSP00000355046"/>
<dbReference type="PeptideAtlas" id="P03891"/>
<dbReference type="ProteomicsDB" id="51612"/>
<dbReference type="Pumba" id="P03891"/>
<dbReference type="Antibodypedia" id="47876">
    <property type="antibodies" value="64 antibodies from 19 providers"/>
</dbReference>
<dbReference type="DNASU" id="4536"/>
<dbReference type="Ensembl" id="ENST00000361453.3">
    <property type="protein sequence ID" value="ENSP00000355046.4"/>
    <property type="gene ID" value="ENSG00000198763.3"/>
</dbReference>
<dbReference type="GeneID" id="4536"/>
<dbReference type="KEGG" id="hsa:4536"/>
<dbReference type="AGR" id="HGNC:7456"/>
<dbReference type="CTD" id="4536"/>
<dbReference type="DisGeNET" id="4536"/>
<dbReference type="GeneCards" id="MT-ND2"/>
<dbReference type="GeneReviews" id="MT-ND2"/>
<dbReference type="HGNC" id="HGNC:7456">
    <property type="gene designation" value="MT-ND2"/>
</dbReference>
<dbReference type="HPA" id="ENSG00000198763">
    <property type="expression patterns" value="Tissue enhanced (brain, heart muscle)"/>
</dbReference>
<dbReference type="MalaCards" id="MT-ND2"/>
<dbReference type="MIM" id="256000">
    <property type="type" value="phenotype"/>
</dbReference>
<dbReference type="MIM" id="502500">
    <property type="type" value="phenotype"/>
</dbReference>
<dbReference type="MIM" id="516001">
    <property type="type" value="gene"/>
</dbReference>
<dbReference type="MIM" id="535000">
    <property type="type" value="phenotype"/>
</dbReference>
<dbReference type="neXtProt" id="NX_P03891"/>
<dbReference type="OpenTargets" id="ENSG00000198763"/>
<dbReference type="Orphanet" id="2609">
    <property type="disease" value="Isolated complex I deficiency"/>
</dbReference>
<dbReference type="Orphanet" id="104">
    <property type="disease" value="Leber hereditary optic neuropathy"/>
</dbReference>
<dbReference type="Orphanet" id="255210">
    <property type="disease" value="Mitochondrial DNA-associated Leigh syndrome"/>
</dbReference>
<dbReference type="PharmGKB" id="PA31260"/>
<dbReference type="VEuPathDB" id="HostDB:ENSG00000198763"/>
<dbReference type="eggNOG" id="KOG4668">
    <property type="taxonomic scope" value="Eukaryota"/>
</dbReference>
<dbReference type="GeneTree" id="ENSGT00730000111348"/>
<dbReference type="HOGENOM" id="CLU_007100_1_3_1"/>
<dbReference type="InParanoid" id="P03891"/>
<dbReference type="OMA" id="HFWVPEV"/>
<dbReference type="PAN-GO" id="P03891">
    <property type="GO annotations" value="3 GO annotations based on evolutionary models"/>
</dbReference>
<dbReference type="PhylomeDB" id="P03891"/>
<dbReference type="BioCyc" id="MetaCyc:HS17772-MONOMER"/>
<dbReference type="PathwayCommons" id="P03891"/>
<dbReference type="Reactome" id="R-HSA-611105">
    <property type="pathway name" value="Respiratory electron transport"/>
</dbReference>
<dbReference type="Reactome" id="R-HSA-6799198">
    <property type="pathway name" value="Complex I biogenesis"/>
</dbReference>
<dbReference type="Reactome" id="R-HSA-9837999">
    <property type="pathway name" value="Mitochondrial protein degradation"/>
</dbReference>
<dbReference type="SignaLink" id="P03891"/>
<dbReference type="SIGNOR" id="P03891"/>
<dbReference type="BioGRID-ORCS" id="4536">
    <property type="hits" value="0 hits in 2 CRISPR screens"/>
</dbReference>
<dbReference type="ChiTaRS" id="ND2">
    <property type="organism name" value="human"/>
</dbReference>
<dbReference type="GeneWiki" id="MT-ND2"/>
<dbReference type="GenomeRNAi" id="4536"/>
<dbReference type="Pharos" id="P03891">
    <property type="development level" value="Tclin"/>
</dbReference>
<dbReference type="PRO" id="PR:P03891"/>
<dbReference type="Proteomes" id="UP000005640">
    <property type="component" value="Mitochondrion MT"/>
</dbReference>
<dbReference type="RNAct" id="P03891">
    <property type="molecule type" value="protein"/>
</dbReference>
<dbReference type="Bgee" id="ENSG00000198763">
    <property type="expression patterns" value="Expressed in subcutaneous adipose tissue and 95 other cell types or tissues"/>
</dbReference>
<dbReference type="ExpressionAtlas" id="P03891">
    <property type="expression patterns" value="baseline and differential"/>
</dbReference>
<dbReference type="GO" id="GO:0005743">
    <property type="term" value="C:mitochondrial inner membrane"/>
    <property type="evidence" value="ECO:0000314"/>
    <property type="project" value="ComplexPortal"/>
</dbReference>
<dbReference type="GO" id="GO:0005739">
    <property type="term" value="C:mitochondrion"/>
    <property type="evidence" value="ECO:0006056"/>
    <property type="project" value="FlyBase"/>
</dbReference>
<dbReference type="GO" id="GO:0045271">
    <property type="term" value="C:respiratory chain complex I"/>
    <property type="evidence" value="ECO:0000314"/>
    <property type="project" value="UniProtKB"/>
</dbReference>
<dbReference type="GO" id="GO:0035255">
    <property type="term" value="F:ionotropic glutamate receptor binding"/>
    <property type="evidence" value="ECO:0007669"/>
    <property type="project" value="Ensembl"/>
</dbReference>
<dbReference type="GO" id="GO:0008137">
    <property type="term" value="F:NADH dehydrogenase (ubiquinone) activity"/>
    <property type="evidence" value="ECO:0000315"/>
    <property type="project" value="UniProtKB"/>
</dbReference>
<dbReference type="GO" id="GO:0019901">
    <property type="term" value="F:protein kinase binding"/>
    <property type="evidence" value="ECO:0007669"/>
    <property type="project" value="Ensembl"/>
</dbReference>
<dbReference type="GO" id="GO:0009060">
    <property type="term" value="P:aerobic respiration"/>
    <property type="evidence" value="ECO:0000303"/>
    <property type="project" value="ComplexPortal"/>
</dbReference>
<dbReference type="GO" id="GO:0006120">
    <property type="term" value="P:mitochondrial electron transport, NADH to ubiquinone"/>
    <property type="evidence" value="ECO:0000315"/>
    <property type="project" value="UniProtKB"/>
</dbReference>
<dbReference type="GO" id="GO:0032981">
    <property type="term" value="P:mitochondrial respiratory chain complex I assembly"/>
    <property type="evidence" value="ECO:0000315"/>
    <property type="project" value="UniProtKB"/>
</dbReference>
<dbReference type="GO" id="GO:0042776">
    <property type="term" value="P:proton motive force-driven mitochondrial ATP synthesis"/>
    <property type="evidence" value="ECO:0000303"/>
    <property type="project" value="ComplexPortal"/>
</dbReference>
<dbReference type="GO" id="GO:0072593">
    <property type="term" value="P:reactive oxygen species metabolic process"/>
    <property type="evidence" value="ECO:0007669"/>
    <property type="project" value="Ensembl"/>
</dbReference>
<dbReference type="GO" id="GO:0001666">
    <property type="term" value="P:response to hypoxia"/>
    <property type="evidence" value="ECO:0007669"/>
    <property type="project" value="Ensembl"/>
</dbReference>
<dbReference type="InterPro" id="IPR050175">
    <property type="entry name" value="Complex_I_Subunit_2"/>
</dbReference>
<dbReference type="InterPro" id="IPR010933">
    <property type="entry name" value="NADH_DH_su2_C"/>
</dbReference>
<dbReference type="InterPro" id="IPR003917">
    <property type="entry name" value="NADH_UbQ_OxRdtase_chain2"/>
</dbReference>
<dbReference type="InterPro" id="IPR001750">
    <property type="entry name" value="ND/Mrp_TM"/>
</dbReference>
<dbReference type="PANTHER" id="PTHR46552">
    <property type="entry name" value="NADH-UBIQUINONE OXIDOREDUCTASE CHAIN 2"/>
    <property type="match status" value="1"/>
</dbReference>
<dbReference type="PANTHER" id="PTHR46552:SF1">
    <property type="entry name" value="NADH-UBIQUINONE OXIDOREDUCTASE CHAIN 2"/>
    <property type="match status" value="1"/>
</dbReference>
<dbReference type="Pfam" id="PF06444">
    <property type="entry name" value="NADH_dehy_S2_C"/>
    <property type="match status" value="1"/>
</dbReference>
<dbReference type="Pfam" id="PF00361">
    <property type="entry name" value="Proton_antipo_M"/>
    <property type="match status" value="1"/>
</dbReference>
<dbReference type="PRINTS" id="PR01436">
    <property type="entry name" value="NADHDHGNASE2"/>
</dbReference>
<organism>
    <name type="scientific">Homo sapiens</name>
    <name type="common">Human</name>
    <dbReference type="NCBI Taxonomy" id="9606"/>
    <lineage>
        <taxon>Eukaryota</taxon>
        <taxon>Metazoa</taxon>
        <taxon>Chordata</taxon>
        <taxon>Craniata</taxon>
        <taxon>Vertebrata</taxon>
        <taxon>Euteleostomi</taxon>
        <taxon>Mammalia</taxon>
        <taxon>Eutheria</taxon>
        <taxon>Euarchontoglires</taxon>
        <taxon>Primates</taxon>
        <taxon>Haplorrhini</taxon>
        <taxon>Catarrhini</taxon>
        <taxon>Hominidae</taxon>
        <taxon>Homo</taxon>
    </lineage>
</organism>
<evidence type="ECO:0000250" key="1">
    <source>
        <dbReference type="UniProtKB" id="P03892"/>
    </source>
</evidence>
<evidence type="ECO:0000255" key="2"/>
<evidence type="ECO:0000269" key="3">
    <source>
    </source>
</evidence>
<evidence type="ECO:0000269" key="4">
    <source>
    </source>
</evidence>
<evidence type="ECO:0000269" key="5">
    <source>
    </source>
</evidence>
<evidence type="ECO:0000269" key="6">
    <source>
    </source>
</evidence>
<evidence type="ECO:0000269" key="7">
    <source>
    </source>
</evidence>
<evidence type="ECO:0000269" key="8">
    <source>
    </source>
</evidence>
<evidence type="ECO:0000269" key="9">
    <source>
    </source>
</evidence>
<evidence type="ECO:0000269" key="10">
    <source>
    </source>
</evidence>
<evidence type="ECO:0000269" key="11">
    <source>
    </source>
</evidence>
<evidence type="ECO:0000269" key="12">
    <source>
    </source>
</evidence>
<evidence type="ECO:0000305" key="13"/>
<evidence type="ECO:0000312" key="14">
    <source>
        <dbReference type="HGNC" id="HGNC:7456"/>
    </source>
</evidence>
<keyword id="KW-0002">3D-structure</keyword>
<keyword id="KW-0026">Alzheimer disease</keyword>
<keyword id="KW-1008">Amyloidosis</keyword>
<keyword id="KW-0225">Disease variant</keyword>
<keyword id="KW-0249">Electron transport</keyword>
<keyword id="KW-0429">Leber hereditary optic neuropathy</keyword>
<keyword id="KW-0431">Leigh syndrome</keyword>
<keyword id="KW-0472">Membrane</keyword>
<keyword id="KW-0496">Mitochondrion</keyword>
<keyword id="KW-0999">Mitochondrion inner membrane</keyword>
<keyword id="KW-0520">NAD</keyword>
<keyword id="KW-0523">Neurodegeneration</keyword>
<keyword id="KW-1274">Primary mitochondrial disease</keyword>
<keyword id="KW-1267">Proteomics identification</keyword>
<keyword id="KW-1185">Reference proteome</keyword>
<keyword id="KW-0679">Respiratory chain</keyword>
<keyword id="KW-1278">Translocase</keyword>
<keyword id="KW-0812">Transmembrane</keyword>
<keyword id="KW-1133">Transmembrane helix</keyword>
<keyword id="KW-0813">Transport</keyword>
<keyword id="KW-0830">Ubiquinone</keyword>
<comment type="function">
    <text evidence="5">Core subunit of the mitochondrial membrane respiratory chain NADH dehydrogenase (Complex I) which catalyzes electron transfer from NADH through the respiratory chain, using ubiquinone as an electron acceptor (PubMed:16996290). Essential for the catalytic activity and assembly of complex I (PubMed:16996290).</text>
</comment>
<comment type="catalytic activity">
    <reaction evidence="5">
        <text>a ubiquinone + NADH + 5 H(+)(in) = a ubiquinol + NAD(+) + 4 H(+)(out)</text>
        <dbReference type="Rhea" id="RHEA:29091"/>
        <dbReference type="Rhea" id="RHEA-COMP:9565"/>
        <dbReference type="Rhea" id="RHEA-COMP:9566"/>
        <dbReference type="ChEBI" id="CHEBI:15378"/>
        <dbReference type="ChEBI" id="CHEBI:16389"/>
        <dbReference type="ChEBI" id="CHEBI:17976"/>
        <dbReference type="ChEBI" id="CHEBI:57540"/>
        <dbReference type="ChEBI" id="CHEBI:57945"/>
        <dbReference type="EC" id="7.1.1.2"/>
    </reaction>
</comment>
<comment type="subunit">
    <text evidence="3 9">Core subunit of respiratory chain NADH dehydrogenase (Complex I) which is composed of 45 different subunits. Interacts with TMEM242 (PubMed:33753518).</text>
</comment>
<comment type="subcellular location">
    <subcellularLocation>
        <location evidence="1">Mitochondrion inner membrane</location>
        <topology evidence="2">Multi-pass membrane protein</topology>
    </subcellularLocation>
</comment>
<comment type="disease" evidence="6 8">
    <disease id="DI-00640">
        <name>Leber hereditary optic neuropathy</name>
        <acronym>LHON</acronym>
        <description>A maternally inherited form of Leber hereditary optic neuropathy, a mitochondrial disease resulting in bilateral painless loss of central vision due to selective degeneration of the retinal ganglion cells and their axons. The disorder shows incomplete penetrance and male predominance. Cardiac conduction defects and neurological defects have also been described in some LHON patients. LHON results from primary mitochondrial DNA mutations affecting the respiratory chain complexes.</description>
        <dbReference type="MIM" id="535000"/>
    </disease>
    <text>The disease is caused by variants affecting the gene represented in this entry.</text>
</comment>
<comment type="disease" evidence="4">
    <disease id="DI-02761">
        <name>Alzheimer disease mitochondrial</name>
        <acronym>AD-MT</acronym>
        <description>Alzheimer disease is a neurodegenerative disorder characterized by progressive dementia, loss of cognitive abilities, and deposition of fibrillar amyloid proteins as intraneuronal neurofibrillary tangles, extracellular amyloid plaques and vascular amyloid deposits. The major constituents of these plaques are neurotoxic amyloid-beta protein 40 and amyloid-beta protein 42, that are produced by the proteolysis of the transmembrane APP protein. The cytotoxic C-terminal fragments (CTFs) and the caspase-cleaved products, such as C31, are also implicated in neuronal death.</description>
        <dbReference type="MIM" id="502500"/>
    </disease>
    <text>Disease susceptibility may be associated with variants affecting the gene represented in this entry.</text>
</comment>
<comment type="disease" evidence="5">
    <disease id="DI-01886">
        <name>Leigh syndrome</name>
        <acronym>LS</acronym>
        <description>An early-onset progressive neurodegenerative disorder characterized by the presence of focal, bilateral lesions in one or more areas of the central nervous system including the brainstem, thalamus, basal ganglia, cerebellum and spinal cord. Clinical features depend on which areas of the central nervous system are involved and include subacute onset of psychomotor retardation, hypotonia, ataxia, weakness, vision loss, eye movement abnormalities, seizures, and dysphagia.</description>
        <dbReference type="MIM" id="256000"/>
    </disease>
    <text>Disease susceptibility is associated with variants affecting the gene represented in this entry.</text>
</comment>
<comment type="similarity">
    <text evidence="13">Belongs to the complex I subunit 2 family.</text>
</comment>
<comment type="sequence caution" evidence="13">
    <conflict type="erroneous initiation">
        <sequence resource="EMBL-CDS" id="AAA65502"/>
    </conflict>
</comment>
<sequence length="347" mass="38961">MNPLAQPVIYSTIFAGTLITALSSHWFFTWVGLEMNMLAFIPVLTKKMNPRSTEAAIKYFLTQATASMILLMAILFNNMLSGQWTMTNTTNQYSSLMIMMAMAMKLGMAPFHFWVPEVTQGTPLTSGLLLLTWQKLAPISIMYQISPSLNVSLLLTLSILSIMAGSWGGLNQTQLRKILAYSSITHMGWMMAVLPYNPNMTILNLTIYIILTTTAFLLLNLNSSTTTLLLSRTWNKLTWLTPLIPSTLLSLGGLPPLTGFLPKWAIIEEFTKNNSLIIPTIMATITLLNLYFYLRLIYSTSITLLPMSNNVKMKWQFEHTKPTPFLPTLIALTTLLLPISPFMLMIL</sequence>
<feature type="chain" id="PRO_0000117595" description="NADH-ubiquinone oxidoreductase chain 2">
    <location>
        <begin position="1"/>
        <end position="347"/>
    </location>
</feature>
<feature type="transmembrane region" description="Helical" evidence="2">
    <location>
        <begin position="13"/>
        <end position="33"/>
    </location>
</feature>
<feature type="transmembrane region" description="Helical" evidence="2">
    <location>
        <begin position="56"/>
        <end position="76"/>
    </location>
</feature>
<feature type="transmembrane region" description="Helical" evidence="2">
    <location>
        <begin position="96"/>
        <end position="116"/>
    </location>
</feature>
<feature type="transmembrane region" description="Helical" evidence="2">
    <location>
        <begin position="123"/>
        <end position="143"/>
    </location>
</feature>
<feature type="transmembrane region" description="Helical" evidence="2">
    <location>
        <begin position="149"/>
        <end position="169"/>
    </location>
</feature>
<feature type="transmembrane region" description="Helical" evidence="2">
    <location>
        <begin position="178"/>
        <end position="198"/>
    </location>
</feature>
<feature type="transmembrane region" description="Helical" evidence="2">
    <location>
        <begin position="201"/>
        <end position="221"/>
    </location>
</feature>
<feature type="transmembrane region" description="Helical" evidence="2">
    <location>
        <begin position="247"/>
        <end position="267"/>
    </location>
</feature>
<feature type="transmembrane region" description="Helical" evidence="2">
    <location>
        <begin position="274"/>
        <end position="294"/>
    </location>
</feature>
<feature type="transmembrane region" description="Helical" evidence="2">
    <location>
        <begin position="326"/>
        <end position="346"/>
    </location>
</feature>
<feature type="sequence variant" id="VAR_008590" evidence="7">
    <original>P</original>
    <variation>L</variation>
    <location>
        <position position="42"/>
    </location>
</feature>
<feature type="sequence variant" id="VAR_011348" description="In dbSNP:rs1117207." evidence="10">
    <original>V</original>
    <variation>I</variation>
    <location>
        <position position="43"/>
    </location>
</feature>
<feature type="sequence variant" id="VAR_008591" description="In dbSNP:rs41510547." evidence="11">
    <original>I</original>
    <variation>T</variation>
    <location>
        <position position="57"/>
    </location>
</feature>
<feature type="sequence variant" id="VAR_008592" evidence="7">
    <original>Q</original>
    <variation>R</variation>
    <location>
        <position position="63"/>
    </location>
</feature>
<feature type="sequence variant" id="VAR_011349" description="In dbSNP:rs1556422884." evidence="12">
    <original>I</original>
    <variation>V</variation>
    <location>
        <position position="69"/>
    </location>
</feature>
<feature type="sequence variant" id="VAR_084383" description="In LS; uncertain significance; decrease in enzyme activity and impaired assembly of complex I; dbSNP:rs267606889." evidence="5">
    <original>L</original>
    <variation>P</variation>
    <location>
        <position position="71"/>
    </location>
</feature>
<feature type="sequence variant" id="VAR_011350" description="In dbSNP:rs201854167." evidence="12">
    <original>N</original>
    <variation>S</variation>
    <location>
        <position position="88"/>
    </location>
</feature>
<feature type="sequence variant" id="VAR_008593" description="In dbSNP:rs1556422903." evidence="7">
    <original>T</original>
    <variation>A</variation>
    <location>
        <position position="119"/>
    </location>
</feature>
<feature type="sequence variant" id="VAR_008594" evidence="7">
    <original>S</original>
    <variation>P</variation>
    <location>
        <position position="148"/>
    </location>
</feature>
<feature type="sequence variant" id="VAR_004755" description="In LHON; secondary mutation; does not seem to directly cause the disease; dbSNP:rs28357980." evidence="8 12">
    <original>N</original>
    <variation>D</variation>
    <location>
        <position position="150"/>
    </location>
</feature>
<feature type="sequence variant" id="VAR_008595" description="In dbSNP:rs879058895." evidence="7">
    <original>N</original>
    <variation>S</variation>
    <location>
        <position position="150"/>
    </location>
</feature>
<feature type="sequence variant" id="VAR_008596" evidence="7">
    <original>I</original>
    <variation>T</variation>
    <location>
        <position position="159"/>
    </location>
</feature>
<feature type="sequence variant" id="VAR_008597" evidence="7">
    <original>T</original>
    <variation>A</variation>
    <location>
        <position position="185"/>
    </location>
</feature>
<feature type="sequence variant" id="VAR_011351" description="In dbSNP:rs28357984." evidence="12">
    <original>L</original>
    <variation>M</variation>
    <location>
        <position position="237"/>
    </location>
</feature>
<feature type="sequence variant" id="VAR_004756" description="In LHON; rare primary mutation; dbSNP:rs199476115." evidence="6">
    <original>G</original>
    <variation>S</variation>
    <location>
        <position position="259"/>
    </location>
</feature>
<feature type="sequence variant" id="VAR_011352" description="In dbSNP:rs1603219855." evidence="12">
    <original>A</original>
    <variation>T</variation>
    <location>
        <position position="265"/>
    </location>
</feature>
<feature type="sequence variant" id="VAR_011353" description="In dbSNP:rs41320049." evidence="12">
    <original>A</original>
    <variation>V</variation>
    <location>
        <position position="265"/>
    </location>
</feature>
<feature type="sequence variant" id="VAR_011354" description="In dbSNP:rs878853115." evidence="12">
    <original>I</original>
    <variation>T</variation>
    <location>
        <position position="278"/>
    </location>
</feature>
<feature type="sequence variant" id="VAR_011355" description="In dbSNP:rs3020601." evidence="10">
    <original>F</original>
    <variation>L</variation>
    <location>
        <position position="325"/>
    </location>
</feature>
<feature type="sequence variant" id="VAR_004758" description="In AD-MT." evidence="4">
    <original>A</original>
    <variation>S</variation>
    <location>
        <position position="331"/>
    </location>
</feature>
<feature type="sequence variant" id="VAR_004757" description="In dbSNP:rs3021088." evidence="10">
    <original>A</original>
    <variation>T</variation>
    <location>
        <position position="331"/>
    </location>
</feature>
<feature type="sequence variant" id="VAR_011356" description="In dbSNP:rs1603219973." evidence="12">
    <original>T</original>
    <variation>A</variation>
    <location>
        <position position="333"/>
    </location>
</feature>
<proteinExistence type="evidence at protein level"/>